<organism>
    <name type="scientific">Oryctolagus cuniculus</name>
    <name type="common">Rabbit</name>
    <dbReference type="NCBI Taxonomy" id="9986"/>
    <lineage>
        <taxon>Eukaryota</taxon>
        <taxon>Metazoa</taxon>
        <taxon>Chordata</taxon>
        <taxon>Craniata</taxon>
        <taxon>Vertebrata</taxon>
        <taxon>Euteleostomi</taxon>
        <taxon>Mammalia</taxon>
        <taxon>Eutheria</taxon>
        <taxon>Euarchontoglires</taxon>
        <taxon>Glires</taxon>
        <taxon>Lagomorpha</taxon>
        <taxon>Leporidae</taxon>
        <taxon>Oryctolagus</taxon>
    </lineage>
</organism>
<reference key="1">
    <citation type="journal article" date="1975" name="J. Biol. Chem.">
        <title>The primary structure of actin from rabbit skeletal muscle. Completion and analysis of the amino acid sequence.</title>
        <authorList>
            <person name="Collins J.H."/>
            <person name="Elzinga M."/>
        </authorList>
    </citation>
    <scope>PROTEIN SEQUENCE OF 3-377</scope>
    <scope>ACETYLATION AT ASP-3</scope>
    <scope>METHYLATION AT HIS-75</scope>
    <source>
        <tissue>Skeletal muscle</tissue>
    </source>
</reference>
<reference key="2">
    <citation type="journal article" date="1978" name="Eur. J. Biochem.">
        <title>Actin amino-acid sequences. Comparison of actins from calf thymus, bovine brain, and SV40-transformed mouse 3T3 cells with rabbit skeletal muscle actin.</title>
        <authorList>
            <person name="Vandekerckhove J."/>
            <person name="Weber K."/>
        </authorList>
    </citation>
    <scope>SEQUENCE REVISION TO 5; 7; 14 AND 75-81</scope>
    <scope>METHYLATION AT HIS-75</scope>
</reference>
<reference key="3">
    <citation type="journal article" date="1977" name="Biochemistry">
        <title>Partial amino acid sequence of brain actin and its homology with muscle actin.</title>
        <authorList>
            <person name="Lu R.C."/>
            <person name="Elzinga M."/>
        </authorList>
    </citation>
    <scope>SEQUENCE REVISION</scope>
</reference>
<reference key="4">
    <citation type="journal article" date="1983" name="Nature">
        <title>A new troponin T and cDNA clones for 13 different muscle proteins, found by shotgun sequencing.</title>
        <authorList>
            <person name="Putney S.D."/>
            <person name="Herlihy W.C."/>
            <person name="Schimmel P.R."/>
        </authorList>
    </citation>
    <scope>NUCLEOTIDE SEQUENCE [MRNA] OF 74-147; 194-283 AND 311-377</scope>
</reference>
<reference key="5">
    <citation type="journal article" date="1979" name="Differentiation">
        <title>The complete amino acid sequence of actins from bovine aorta, bovine heart, bovine fast skeletal muscle, and rabbit slow skeletal muscle. A protein-chemical analysis of muscle actin differentiation.</title>
        <authorList>
            <person name="Vandekerckhove J."/>
            <person name="Weber K."/>
        </authorList>
    </citation>
    <scope>PROTEIN SEQUENCE OF 3-377</scope>
    <scope>METHYLATION AT HIS-75</scope>
    <source>
        <tissue>Skeletal muscle</tissue>
    </source>
</reference>
<reference key="6">
    <citation type="journal article" date="1993" name="J. Biol. Chem.">
        <title>Further characterization of the alpha-actinin-actin interface and comparison with filamin-binding sites on actin.</title>
        <authorList>
            <person name="Lebart M.C."/>
            <person name="Mejean C."/>
            <person name="Roustan C."/>
            <person name="Benyamin Y."/>
        </authorList>
    </citation>
    <scope>INTERACTION WITH ALPHA-ACTININ</scope>
</reference>
<reference evidence="16" key="7">
    <citation type="journal article" date="1990" name="Nature">
        <title>Atomic structure of the actin:DNase I complex.</title>
        <authorList>
            <person name="Kabsch W."/>
            <person name="Mannherz H.G."/>
            <person name="Suck D."/>
            <person name="Pai E.F."/>
            <person name="Holmes K.C."/>
        </authorList>
    </citation>
    <scope>X-RAY CRYSTALLOGRAPHY (2.80 ANGSTROMS) OF 3-374 IN COMPLEX WITH ATP; BETA-D-MANNOSE AND N-ACETYL-D-GLUCOSAMINE</scope>
    <scope>METHYLATION AT HIS-75</scope>
</reference>
<reference evidence="17" key="8">
    <citation type="journal article" date="2003" name="J. Biol. Chem.">
        <title>Crystal structure of monomeric actin in the ATP state. Structural basis of nucleotide-dependent actin dynamics.</title>
        <authorList>
            <person name="Graceffa P."/>
            <person name="Dominguez R."/>
        </authorList>
    </citation>
    <scope>X-RAY CRYSTALLOGRAPHY (1.85 ANGSTROMS) OF 3-377 IN COMPLEX WITH ATP ANALOG AND CALCIUM</scope>
    <scope>METHYLATION AT HIS-75</scope>
</reference>
<reference key="9">
    <citation type="journal article" date="2004" name="J. Struct. Biol.">
        <title>Actin crystal dynamics: structural implications for F-actin nucleation, polymerization, and branching mediated by the anti-parallel dimer.</title>
        <authorList>
            <person name="Reutzel R."/>
            <person name="Yoshioka C."/>
            <person name="Govindasamy L."/>
            <person name="Yarmola E.G."/>
            <person name="Agbandje-McKenna M."/>
            <person name="Bubb M.R."/>
            <person name="McKenna R."/>
        </authorList>
    </citation>
    <scope>X-RAY CRYSTALLOGRAPHY (3.0 ANGSTROMS) OF 3-377 IN COMPLEX WITH ATP</scope>
</reference>
<reference evidence="18 19" key="10">
    <citation type="journal article" date="2006" name="Structure">
        <title>A steric antagonism of actin polymerization by a Salmonella virulence protein.</title>
        <authorList>
            <person name="Margarit S.M."/>
            <person name="Davidson W."/>
            <person name="Frego L."/>
            <person name="Stebbins C.E."/>
        </authorList>
    </citation>
    <scope>X-RAY CRYSTALLOGRAPHY (1.90 ANGSTROMS) OF 7-377</scope>
    <scope>ADP-RIBOSYLATION AT ARG-179 BY SPVB</scope>
    <scope>METHYLATION AT HIS-75</scope>
</reference>
<reference key="11">
    <citation type="journal article" date="2012" name="Biophys. J.">
        <title>Structural states and dynamics of the D-loop in actin.</title>
        <authorList>
            <person name="Durer Z.A."/>
            <person name="Kudryashov D.S."/>
            <person name="Sawaya M.R."/>
            <person name="Altenbach C."/>
            <person name="Hubbell W."/>
            <person name="Reisler E."/>
        </authorList>
    </citation>
    <scope>X-RAY CRYSTALLOGRAPHY (3.0 ANGSTROMS) IN COMPLEX WITH COBL; GSN AND TMSB4X</scope>
    <scope>SUBUNIT</scope>
</reference>
<dbReference type="EC" id="3.6.4.-" evidence="5"/>
<dbReference type="EMBL" id="V00872">
    <property type="protein sequence ID" value="CAA24241.1"/>
    <property type="molecule type" value="mRNA"/>
</dbReference>
<dbReference type="EMBL" id="V00873">
    <property type="protein sequence ID" value="CAA24242.1"/>
    <property type="molecule type" value="mRNA"/>
</dbReference>
<dbReference type="EMBL" id="V00874">
    <property type="protein sequence ID" value="CAA24243.1"/>
    <property type="molecule type" value="mRNA"/>
</dbReference>
<dbReference type="PIR" id="A92182">
    <property type="entry name" value="ATRB"/>
</dbReference>
<dbReference type="PIR" id="I46471">
    <property type="entry name" value="I46471"/>
</dbReference>
<dbReference type="PIR" id="I46472">
    <property type="entry name" value="I46472"/>
</dbReference>
<dbReference type="PIR" id="I46473">
    <property type="entry name" value="I46473"/>
</dbReference>
<dbReference type="RefSeq" id="XP_002722940.2">
    <property type="nucleotide sequence ID" value="XM_002722894.5"/>
</dbReference>
<dbReference type="RefSeq" id="XP_051694123.1">
    <property type="nucleotide sequence ID" value="XM_051838163.2"/>
</dbReference>
<dbReference type="PDB" id="1ATN">
    <property type="method" value="X-ray"/>
    <property type="resolution" value="2.80 A"/>
    <property type="chains" value="A=3-374"/>
</dbReference>
<dbReference type="PDB" id="1EQY">
    <property type="method" value="X-ray"/>
    <property type="resolution" value="2.30 A"/>
    <property type="chains" value="A=1-377"/>
</dbReference>
<dbReference type="PDB" id="1ESV">
    <property type="method" value="X-ray"/>
    <property type="resolution" value="2.00 A"/>
    <property type="chains" value="A=1-377"/>
</dbReference>
<dbReference type="PDB" id="1H1V">
    <property type="method" value="X-ray"/>
    <property type="resolution" value="3.00 A"/>
    <property type="chains" value="A=3-377"/>
</dbReference>
<dbReference type="PDB" id="1IJJ">
    <property type="method" value="X-ray"/>
    <property type="resolution" value="2.85 A"/>
    <property type="chains" value="A/B=1-377"/>
</dbReference>
<dbReference type="PDB" id="1J6Z">
    <property type="method" value="X-ray"/>
    <property type="resolution" value="1.54 A"/>
    <property type="chains" value="A=3-377"/>
</dbReference>
<dbReference type="PDB" id="1KXP">
    <property type="method" value="X-ray"/>
    <property type="resolution" value="2.10 A"/>
    <property type="chains" value="A=3-377"/>
</dbReference>
<dbReference type="PDB" id="1LCU">
    <property type="method" value="X-ray"/>
    <property type="resolution" value="3.50 A"/>
    <property type="chains" value="A/B=7-377"/>
</dbReference>
<dbReference type="PDB" id="1LOT">
    <property type="method" value="X-ray"/>
    <property type="resolution" value="2.50 A"/>
    <property type="chains" value="B=3-377"/>
</dbReference>
<dbReference type="PDB" id="1M8Q">
    <property type="method" value="EM"/>
    <property type="resolution" value="70.00 A"/>
    <property type="chains" value="0/1/2/3/4/5/7/8/9/V/W/X/Y/Z=3-377"/>
</dbReference>
<dbReference type="PDB" id="1MA9">
    <property type="method" value="X-ray"/>
    <property type="resolution" value="2.40 A"/>
    <property type="chains" value="B=3-377"/>
</dbReference>
<dbReference type="PDB" id="1MVW">
    <property type="method" value="EM"/>
    <property type="resolution" value="70.00 A"/>
    <property type="chains" value="1/2/3/4/5/6/7/8/9/V/W/X/Y/Z=3-377"/>
</dbReference>
<dbReference type="PDB" id="1NWK">
    <property type="method" value="X-ray"/>
    <property type="resolution" value="1.85 A"/>
    <property type="chains" value="A=3-377"/>
</dbReference>
<dbReference type="PDB" id="1O18">
    <property type="method" value="EM"/>
    <property type="resolution" value="70.00 A"/>
    <property type="chains" value="1/2/3/4/5/6/7/8/9/V/W/X/Y/Z=3-377"/>
</dbReference>
<dbReference type="PDB" id="1O19">
    <property type="method" value="EM"/>
    <property type="resolution" value="70.00 A"/>
    <property type="chains" value="1/2/3/4/5/6/7/8/9/V/W/X/Y/Z=3-377"/>
</dbReference>
<dbReference type="PDB" id="1O1A">
    <property type="method" value="EM"/>
    <property type="resolution" value="70.00 A"/>
    <property type="chains" value="1/2/3/4/5/6/7/8/9/V/W/X/Y/Z=3-377"/>
</dbReference>
<dbReference type="PDB" id="1O1B">
    <property type="method" value="EM"/>
    <property type="resolution" value="70.00 A"/>
    <property type="chains" value="0/1/2/3/4/5/7/8/9/V/W/X/Y/Z=3-377"/>
</dbReference>
<dbReference type="PDB" id="1O1C">
    <property type="method" value="EM"/>
    <property type="resolution" value="70.00 A"/>
    <property type="chains" value="0/1/2/3/4/5/7/8/9/V/W/X/Y/Z=3-377"/>
</dbReference>
<dbReference type="PDB" id="1O1D">
    <property type="method" value="EM"/>
    <property type="resolution" value="70.00 A"/>
    <property type="chains" value="0/1/2/3/4/5/7/8/9/V/W/X/Y/Z=3-377"/>
</dbReference>
<dbReference type="PDB" id="1O1E">
    <property type="method" value="EM"/>
    <property type="resolution" value="70.00 A"/>
    <property type="chains" value="1/2/3/4/5/6/7/8/9/V/W/X/Y/Z=3-377"/>
</dbReference>
<dbReference type="PDB" id="1O1F">
    <property type="method" value="EM"/>
    <property type="resolution" value="70.00 A"/>
    <property type="chains" value="0/1/2/3/4/5/6/7/8/V/W/X/Y/Z=3-377"/>
</dbReference>
<dbReference type="PDB" id="1O1G">
    <property type="method" value="EM"/>
    <property type="resolution" value="70.00 A"/>
    <property type="chains" value="1/2/3/4/5/6/7/8/9/V/W/X/Y/Z=3-377"/>
</dbReference>
<dbReference type="PDB" id="1P8Z">
    <property type="method" value="X-ray"/>
    <property type="resolution" value="2.60 A"/>
    <property type="chains" value="A=1-377"/>
</dbReference>
<dbReference type="PDB" id="1QZ5">
    <property type="method" value="X-ray"/>
    <property type="resolution" value="1.45 A"/>
    <property type="chains" value="A=3-377"/>
</dbReference>
<dbReference type="PDB" id="1QZ6">
    <property type="method" value="X-ray"/>
    <property type="resolution" value="1.60 A"/>
    <property type="chains" value="A=3-377"/>
</dbReference>
<dbReference type="PDB" id="1RDW">
    <property type="method" value="X-ray"/>
    <property type="resolution" value="2.30 A"/>
    <property type="chains" value="X=3-377"/>
</dbReference>
<dbReference type="PDB" id="1RFQ">
    <property type="method" value="X-ray"/>
    <property type="resolution" value="3.00 A"/>
    <property type="chains" value="A/B=3-377"/>
</dbReference>
<dbReference type="PDB" id="1RGI">
    <property type="method" value="X-ray"/>
    <property type="resolution" value="3.00 A"/>
    <property type="chains" value="A=1-377"/>
</dbReference>
<dbReference type="PDB" id="1S22">
    <property type="method" value="X-ray"/>
    <property type="resolution" value="1.60 A"/>
    <property type="chains" value="A=3-377"/>
</dbReference>
<dbReference type="PDB" id="1SQK">
    <property type="method" value="X-ray"/>
    <property type="resolution" value="2.50 A"/>
    <property type="chains" value="A=1-377"/>
</dbReference>
<dbReference type="PDB" id="1T44">
    <property type="method" value="X-ray"/>
    <property type="resolution" value="2.00 A"/>
    <property type="chains" value="A=8-377"/>
</dbReference>
<dbReference type="PDB" id="1WUA">
    <property type="method" value="X-ray"/>
    <property type="resolution" value="1.45 A"/>
    <property type="chains" value="A=3-377"/>
</dbReference>
<dbReference type="PDB" id="1Y64">
    <property type="method" value="X-ray"/>
    <property type="resolution" value="3.05 A"/>
    <property type="chains" value="A=3-377"/>
</dbReference>
<dbReference type="PDB" id="1YXQ">
    <property type="method" value="X-ray"/>
    <property type="resolution" value="2.01 A"/>
    <property type="chains" value="A/B=3-377"/>
</dbReference>
<dbReference type="PDB" id="2A3Z">
    <property type="method" value="X-ray"/>
    <property type="resolution" value="2.08 A"/>
    <property type="chains" value="A=3-377"/>
</dbReference>
<dbReference type="PDB" id="2A40">
    <property type="method" value="X-ray"/>
    <property type="resolution" value="1.80 A"/>
    <property type="chains" value="A/D=3-377"/>
</dbReference>
<dbReference type="PDB" id="2A41">
    <property type="method" value="X-ray"/>
    <property type="resolution" value="2.60 A"/>
    <property type="chains" value="A=3-377"/>
</dbReference>
<dbReference type="PDB" id="2A42">
    <property type="method" value="X-ray"/>
    <property type="resolution" value="1.85 A"/>
    <property type="chains" value="A=3-377"/>
</dbReference>
<dbReference type="PDB" id="2A5X">
    <property type="method" value="X-ray"/>
    <property type="resolution" value="2.49 A"/>
    <property type="chains" value="A=3-377"/>
</dbReference>
<dbReference type="PDB" id="2ASM">
    <property type="method" value="X-ray"/>
    <property type="resolution" value="1.60 A"/>
    <property type="chains" value="A=3-377"/>
</dbReference>
<dbReference type="PDB" id="2ASO">
    <property type="method" value="X-ray"/>
    <property type="resolution" value="1.70 A"/>
    <property type="chains" value="A=3-377"/>
</dbReference>
<dbReference type="PDB" id="2ASP">
    <property type="method" value="X-ray"/>
    <property type="resolution" value="1.64 A"/>
    <property type="chains" value="A=3-377"/>
</dbReference>
<dbReference type="PDB" id="2D1K">
    <property type="method" value="X-ray"/>
    <property type="resolution" value="2.50 A"/>
    <property type="chains" value="A=3-377"/>
</dbReference>
<dbReference type="PDB" id="2FF3">
    <property type="method" value="X-ray"/>
    <property type="resolution" value="2.00 A"/>
    <property type="chains" value="B=3-377"/>
</dbReference>
<dbReference type="PDB" id="2FF6">
    <property type="method" value="X-ray"/>
    <property type="resolution" value="2.05 A"/>
    <property type="chains" value="A=3-377"/>
</dbReference>
<dbReference type="PDB" id="2FXU">
    <property type="method" value="X-ray"/>
    <property type="resolution" value="1.35 A"/>
    <property type="chains" value="A=3-377"/>
</dbReference>
<dbReference type="PDB" id="2GWJ">
    <property type="method" value="X-ray"/>
    <property type="resolution" value="1.90 A"/>
    <property type="chains" value="A=7-377"/>
</dbReference>
<dbReference type="PDB" id="2GWK">
    <property type="method" value="X-ray"/>
    <property type="resolution" value="2.00 A"/>
    <property type="chains" value="A/B=7-377"/>
</dbReference>
<dbReference type="PDB" id="2HMP">
    <property type="method" value="X-ray"/>
    <property type="resolution" value="1.90 A"/>
    <property type="chains" value="A/B=3-377"/>
</dbReference>
<dbReference type="PDB" id="2PAV">
    <property type="method" value="X-ray"/>
    <property type="resolution" value="1.80 A"/>
    <property type="chains" value="A=3-377"/>
</dbReference>
<dbReference type="PDB" id="2PBD">
    <property type="method" value="X-ray"/>
    <property type="resolution" value="1.50 A"/>
    <property type="chains" value="A=1-377"/>
</dbReference>
<dbReference type="PDB" id="2Q0R">
    <property type="method" value="X-ray"/>
    <property type="resolution" value="1.70 A"/>
    <property type="chains" value="A=3-377"/>
</dbReference>
<dbReference type="PDB" id="2Q0U">
    <property type="method" value="X-ray"/>
    <property type="resolution" value="1.45 A"/>
    <property type="chains" value="A=3-377"/>
</dbReference>
<dbReference type="PDB" id="2Q1N">
    <property type="method" value="X-ray"/>
    <property type="resolution" value="2.70 A"/>
    <property type="chains" value="A/B=3-377"/>
</dbReference>
<dbReference type="PDB" id="2Q31">
    <property type="method" value="X-ray"/>
    <property type="resolution" value="2.70 A"/>
    <property type="chains" value="A/B=3-377"/>
</dbReference>
<dbReference type="PDB" id="2Q36">
    <property type="method" value="X-ray"/>
    <property type="resolution" value="2.50 A"/>
    <property type="chains" value="A=3-377"/>
</dbReference>
<dbReference type="PDB" id="2Q97">
    <property type="method" value="X-ray"/>
    <property type="resolution" value="2.50 A"/>
    <property type="chains" value="A=3-377"/>
</dbReference>
<dbReference type="PDB" id="2V51">
    <property type="method" value="X-ray"/>
    <property type="resolution" value="2.35 A"/>
    <property type="chains" value="B/D=1-377"/>
</dbReference>
<dbReference type="PDB" id="2V52">
    <property type="method" value="X-ray"/>
    <property type="resolution" value="1.45 A"/>
    <property type="chains" value="B=1-377"/>
</dbReference>
<dbReference type="PDB" id="2VCP">
    <property type="method" value="X-ray"/>
    <property type="resolution" value="3.20 A"/>
    <property type="chains" value="A/B=3-377"/>
</dbReference>
<dbReference type="PDB" id="2VYP">
    <property type="method" value="X-ray"/>
    <property type="resolution" value="2.35 A"/>
    <property type="chains" value="A/B=1-377"/>
</dbReference>
<dbReference type="PDB" id="2W49">
    <property type="method" value="EM"/>
    <property type="resolution" value="35.00 A"/>
    <property type="chains" value="D/E/F/G/H/I/J/K/L/M/N/O/P/Q/R/S=3-374"/>
</dbReference>
<dbReference type="PDB" id="2W4U">
    <property type="method" value="EM"/>
    <property type="resolution" value="35.00 A"/>
    <property type="chains" value="D/E/F/G/H/I/J/K/L/M/N/O/P/Q/R/S=3-374"/>
</dbReference>
<dbReference type="PDB" id="2Y83">
    <property type="method" value="EM"/>
    <property type="resolution" value="22.90 A"/>
    <property type="chains" value="O/P/Q/R/S/T=3-377"/>
</dbReference>
<dbReference type="PDB" id="2YJE">
    <property type="method" value="X-ray"/>
    <property type="resolution" value="3.10 A"/>
    <property type="chains" value="A/B/C=1-377"/>
</dbReference>
<dbReference type="PDB" id="2YJF">
    <property type="method" value="X-ray"/>
    <property type="resolution" value="3.50 A"/>
    <property type="chains" value="A/B/C/D/E=1-377"/>
</dbReference>
<dbReference type="PDB" id="2ZWH">
    <property type="method" value="Fiber"/>
    <property type="resolution" value="3.30 A"/>
    <property type="chains" value="A=3-377"/>
</dbReference>
<dbReference type="PDB" id="3B5U">
    <property type="method" value="EM"/>
    <property type="chains" value="A/B/C/D/E/F/G/H/I/J/K/L/M/N=1-377"/>
</dbReference>
<dbReference type="PDB" id="3BUZ">
    <property type="method" value="X-ray"/>
    <property type="resolution" value="2.81 A"/>
    <property type="chains" value="B=3-377"/>
</dbReference>
<dbReference type="PDB" id="3CJB">
    <property type="method" value="X-ray"/>
    <property type="resolution" value="3.21 A"/>
    <property type="chains" value="A=1-377"/>
</dbReference>
<dbReference type="PDB" id="3CJC">
    <property type="method" value="X-ray"/>
    <property type="resolution" value="3.90 A"/>
    <property type="chains" value="A=1-377"/>
</dbReference>
<dbReference type="PDB" id="3DAW">
    <property type="method" value="X-ray"/>
    <property type="resolution" value="2.55 A"/>
    <property type="chains" value="A=1-377"/>
</dbReference>
<dbReference type="PDB" id="3FFK">
    <property type="method" value="X-ray"/>
    <property type="resolution" value="3.00 A"/>
    <property type="chains" value="B/E=1-377"/>
</dbReference>
<dbReference type="PDB" id="3G37">
    <property type="method" value="EM"/>
    <property type="chains" value="O/P/Q/R/S/T/U/V/W/X/Y/Z=3-377"/>
</dbReference>
<dbReference type="PDB" id="3HBT">
    <property type="method" value="X-ray"/>
    <property type="resolution" value="2.70 A"/>
    <property type="chains" value="A=3-377"/>
</dbReference>
<dbReference type="PDB" id="3J4K">
    <property type="method" value="EM"/>
    <property type="resolution" value="8.00 A"/>
    <property type="chains" value="A/B/C/D/E=3-377"/>
</dbReference>
<dbReference type="PDB" id="3J8A">
    <property type="method" value="EM"/>
    <property type="resolution" value="3.70 A"/>
    <property type="chains" value="A/B/C/D/E=3-377"/>
</dbReference>
<dbReference type="PDB" id="3J8I">
    <property type="method" value="EM"/>
    <property type="resolution" value="4.70 A"/>
    <property type="chains" value="D/E/F/G/H=1-377"/>
</dbReference>
<dbReference type="PDB" id="3J8J">
    <property type="method" value="EM"/>
    <property type="resolution" value="12.00 A"/>
    <property type="chains" value="A/B/C/D/E/F/G/H/I/J/K=1-377"/>
</dbReference>
<dbReference type="PDB" id="3J8K">
    <property type="method" value="EM"/>
    <property type="resolution" value="12.00 A"/>
    <property type="chains" value="A/B/C/D/E/F/G/H/I/J=1-377"/>
</dbReference>
<dbReference type="PDB" id="3JBI">
    <property type="method" value="EM"/>
    <property type="resolution" value="8.50 A"/>
    <property type="chains" value="A/B=3-377"/>
</dbReference>
<dbReference type="PDB" id="3JBJ">
    <property type="method" value="EM"/>
    <property type="resolution" value="7.60 A"/>
    <property type="chains" value="A/B=3-377"/>
</dbReference>
<dbReference type="PDB" id="3JBK">
    <property type="method" value="EM"/>
    <property type="resolution" value="8.20 A"/>
    <property type="chains" value="A/B=3-377"/>
</dbReference>
<dbReference type="PDB" id="3M1F">
    <property type="method" value="X-ray"/>
    <property type="resolution" value="2.89 A"/>
    <property type="chains" value="A=3-377"/>
</dbReference>
<dbReference type="PDB" id="3M3N">
    <property type="method" value="X-ray"/>
    <property type="resolution" value="7.00 A"/>
    <property type="chains" value="A/B=3-377"/>
</dbReference>
<dbReference type="PDB" id="3M6G">
    <property type="method" value="X-ray"/>
    <property type="resolution" value="2.00 A"/>
    <property type="chains" value="A/B=3-373"/>
</dbReference>
<dbReference type="PDB" id="3MFP">
    <property type="method" value="EM"/>
    <property type="chains" value="A=3-377"/>
</dbReference>
<dbReference type="PDB" id="3MN5">
    <property type="method" value="X-ray"/>
    <property type="resolution" value="1.50 A"/>
    <property type="chains" value="A=3-377"/>
</dbReference>
<dbReference type="PDB" id="3SJH">
    <property type="method" value="X-ray"/>
    <property type="resolution" value="1.75 A"/>
    <property type="chains" value="A=3-377"/>
</dbReference>
<dbReference type="PDB" id="3TPQ">
    <property type="method" value="X-ray"/>
    <property type="resolution" value="3.45 A"/>
    <property type="chains" value="A/B/C/D/E=3-377"/>
</dbReference>
<dbReference type="PDB" id="3TU5">
    <property type="method" value="X-ray"/>
    <property type="resolution" value="3.00 A"/>
    <property type="chains" value="A=1-377"/>
</dbReference>
<dbReference type="PDB" id="3U8X">
    <property type="method" value="X-ray"/>
    <property type="resolution" value="2.00 A"/>
    <property type="chains" value="A/C=3-377"/>
</dbReference>
<dbReference type="PDB" id="3U9Z">
    <property type="method" value="X-ray"/>
    <property type="resolution" value="2.09 A"/>
    <property type="chains" value="A=3-377"/>
</dbReference>
<dbReference type="PDB" id="3UE5">
    <property type="method" value="X-ray"/>
    <property type="resolution" value="2.76 A"/>
    <property type="chains" value="A=3-377"/>
</dbReference>
<dbReference type="PDB" id="4A7F">
    <property type="method" value="EM"/>
    <property type="resolution" value="7.70 A"/>
    <property type="chains" value="A/D/E/F/I=3-377"/>
</dbReference>
<dbReference type="PDB" id="4A7H">
    <property type="method" value="EM"/>
    <property type="resolution" value="7.80 A"/>
    <property type="chains" value="A/D/E/F/G=3-377"/>
</dbReference>
<dbReference type="PDB" id="4A7L">
    <property type="method" value="EM"/>
    <property type="resolution" value="8.10 A"/>
    <property type="chains" value="A/D/E/F/I=3-377"/>
</dbReference>
<dbReference type="PDB" id="4A7N">
    <property type="method" value="EM"/>
    <property type="resolution" value="8.90 A"/>
    <property type="chains" value="A/B/C/D/E=3-377"/>
</dbReference>
<dbReference type="PDB" id="4B1V">
    <property type="method" value="X-ray"/>
    <property type="resolution" value="1.75 A"/>
    <property type="chains" value="A/B=2-377"/>
</dbReference>
<dbReference type="PDB" id="4B1W">
    <property type="method" value="X-ray"/>
    <property type="resolution" value="1.95 A"/>
    <property type="chains" value="B=2-377"/>
</dbReference>
<dbReference type="PDB" id="4B1X">
    <property type="method" value="X-ray"/>
    <property type="resolution" value="1.80 A"/>
    <property type="chains" value="B=2-377"/>
</dbReference>
<dbReference type="PDB" id="4B1Y">
    <property type="method" value="X-ray"/>
    <property type="resolution" value="1.29 A"/>
    <property type="chains" value="B=2-377"/>
</dbReference>
<dbReference type="PDB" id="4B1Z">
    <property type="method" value="X-ray"/>
    <property type="resolution" value="3.30 A"/>
    <property type="chains" value="A/B/C/D/E/F=2-377"/>
</dbReference>
<dbReference type="PDB" id="4EAH">
    <property type="method" value="X-ray"/>
    <property type="resolution" value="3.40 A"/>
    <property type="chains" value="D/F/G/H=1-377"/>
</dbReference>
<dbReference type="PDB" id="4GY2">
    <property type="method" value="X-ray"/>
    <property type="resolution" value="2.71 A"/>
    <property type="chains" value="B=3-377"/>
</dbReference>
<dbReference type="PDB" id="4H03">
    <property type="method" value="X-ray"/>
    <property type="resolution" value="1.75 A"/>
    <property type="chains" value="B=3-377"/>
</dbReference>
<dbReference type="PDB" id="4H0T">
    <property type="method" value="X-ray"/>
    <property type="resolution" value="2.20 A"/>
    <property type="chains" value="B=3-377"/>
</dbReference>
<dbReference type="PDB" id="4H0V">
    <property type="method" value="X-ray"/>
    <property type="resolution" value="2.03 A"/>
    <property type="chains" value="B=3-377"/>
</dbReference>
<dbReference type="PDB" id="4H0X">
    <property type="method" value="X-ray"/>
    <property type="resolution" value="2.33 A"/>
    <property type="chains" value="B=3-377"/>
</dbReference>
<dbReference type="PDB" id="4H0Y">
    <property type="method" value="X-ray"/>
    <property type="resolution" value="1.94 A"/>
    <property type="chains" value="B=3-377"/>
</dbReference>
<dbReference type="PDB" id="4K41">
    <property type="method" value="X-ray"/>
    <property type="resolution" value="1.40 A"/>
    <property type="chains" value="A=3-377"/>
</dbReference>
<dbReference type="PDB" id="4K42">
    <property type="method" value="X-ray"/>
    <property type="resolution" value="2.90 A"/>
    <property type="chains" value="A/B/C/D=3-377"/>
</dbReference>
<dbReference type="PDB" id="4K43">
    <property type="method" value="X-ray"/>
    <property type="resolution" value="2.90 A"/>
    <property type="chains" value="A/B=3-377"/>
</dbReference>
<dbReference type="PDB" id="4PKG">
    <property type="method" value="X-ray"/>
    <property type="resolution" value="1.80 A"/>
    <property type="chains" value="A=1-377"/>
</dbReference>
<dbReference type="PDB" id="4PKH">
    <property type="method" value="X-ray"/>
    <property type="resolution" value="2.15 A"/>
    <property type="chains" value="A/D/F/I=1-377"/>
</dbReference>
<dbReference type="PDB" id="4PKI">
    <property type="method" value="X-ray"/>
    <property type="resolution" value="2.30 A"/>
    <property type="chains" value="A=1-377"/>
</dbReference>
<dbReference type="PDB" id="4PL8">
    <property type="method" value="X-ray"/>
    <property type="resolution" value="2.00 A"/>
    <property type="chains" value="A/B=3-377"/>
</dbReference>
<dbReference type="PDB" id="4V0U">
    <property type="method" value="X-ray"/>
    <property type="resolution" value="7.88 A"/>
    <property type="chains" value="A/B/C/L/M=3-377"/>
</dbReference>
<dbReference type="PDB" id="4WYB">
    <property type="method" value="X-ray"/>
    <property type="resolution" value="3.49 A"/>
    <property type="chains" value="A/C/E/G/I/K/M/O/Q/S/U/X=1-377"/>
</dbReference>
<dbReference type="PDB" id="4Z94">
    <property type="method" value="X-ray"/>
    <property type="resolution" value="2.40 A"/>
    <property type="chains" value="A=1-377"/>
</dbReference>
<dbReference type="PDB" id="5H53">
    <property type="method" value="EM"/>
    <property type="resolution" value="5.20 A"/>
    <property type="chains" value="D/E=3-377"/>
</dbReference>
<dbReference type="PDB" id="5JLF">
    <property type="method" value="EM"/>
    <property type="resolution" value="3.60 A"/>
    <property type="chains" value="A/B/C/D/E=3-377"/>
</dbReference>
<dbReference type="PDB" id="5KG8">
    <property type="method" value="EM"/>
    <property type="resolution" value="9.10 A"/>
    <property type="chains" value="B/C/D=3-377"/>
</dbReference>
<dbReference type="PDB" id="5MVA">
    <property type="method" value="EM"/>
    <property type="resolution" value="27.70 A"/>
    <property type="chains" value="A/B/C/D/E/F/G/H/I/J/K/L/M/N/O/P/Q/R/S/T/U/V/W=3-377"/>
</dbReference>
<dbReference type="PDB" id="5MVY">
    <property type="method" value="EM"/>
    <property type="resolution" value="28.40 A"/>
    <property type="chains" value="A/B/C/D/E/F/G/H/I/J/K/L/M/N/O/P/Q/R/S/T/U/V/W=3-377"/>
</dbReference>
<dbReference type="PDB" id="5ONV">
    <property type="method" value="EM"/>
    <property type="resolution" value="4.10 A"/>
    <property type="chains" value="A/B/C/D/E=3-377"/>
</dbReference>
<dbReference type="PDB" id="5OOC">
    <property type="method" value="EM"/>
    <property type="resolution" value="3.60 A"/>
    <property type="chains" value="A/B/C/D/E=3-377"/>
</dbReference>
<dbReference type="PDB" id="5OOD">
    <property type="method" value="EM"/>
    <property type="resolution" value="3.70 A"/>
    <property type="chains" value="A/B/C/D/E=3-377"/>
</dbReference>
<dbReference type="PDB" id="5OOE">
    <property type="method" value="EM"/>
    <property type="resolution" value="3.60 A"/>
    <property type="chains" value="A/B/C/D/E=3-377"/>
</dbReference>
<dbReference type="PDB" id="5OOF">
    <property type="method" value="EM"/>
    <property type="resolution" value="3.40 A"/>
    <property type="chains" value="A/B/C/D/E=3-377"/>
</dbReference>
<dbReference type="PDB" id="5UBO">
    <property type="method" value="X-ray"/>
    <property type="resolution" value="2.39 A"/>
    <property type="chains" value="A=1-377"/>
</dbReference>
<dbReference type="PDB" id="5YEE">
    <property type="method" value="X-ray"/>
    <property type="resolution" value="1.81 A"/>
    <property type="chains" value="B=1-377"/>
</dbReference>
<dbReference type="PDB" id="5YPU">
    <property type="method" value="X-ray"/>
    <property type="resolution" value="2.00 A"/>
    <property type="chains" value="A/C=7-374"/>
</dbReference>
<dbReference type="PDB" id="5ZZA">
    <property type="method" value="X-ray"/>
    <property type="resolution" value="1.53 A"/>
    <property type="chains" value="A=5-377"/>
</dbReference>
<dbReference type="PDB" id="5ZZB">
    <property type="method" value="X-ray"/>
    <property type="resolution" value="2.30 A"/>
    <property type="chains" value="B/D=7-377"/>
</dbReference>
<dbReference type="PDB" id="6AV9">
    <property type="method" value="EM"/>
    <property type="resolution" value="3.90 A"/>
    <property type="chains" value="A/B/C=1-377"/>
</dbReference>
<dbReference type="PDB" id="6AVB">
    <property type="method" value="EM"/>
    <property type="resolution" value="3.90 A"/>
    <property type="chains" value="A/B/C=1-377"/>
</dbReference>
<dbReference type="PDB" id="6BIH">
    <property type="method" value="EM"/>
    <property type="resolution" value="6.00 A"/>
    <property type="chains" value="C=1-377"/>
</dbReference>
<dbReference type="PDB" id="6BNO">
    <property type="method" value="EM"/>
    <property type="resolution" value="5.50 A"/>
    <property type="chains" value="A/B/C/D/E/F/G/H=1-373"/>
</dbReference>
<dbReference type="PDB" id="6BNP">
    <property type="method" value="EM"/>
    <property type="resolution" value="4.60 A"/>
    <property type="chains" value="A/B/C/D/E/F/G/H=1-373"/>
</dbReference>
<dbReference type="PDB" id="6BNQ">
    <property type="method" value="EM"/>
    <property type="resolution" value="5.50 A"/>
    <property type="chains" value="A/B/C/D/E/F/G/H=1-373"/>
</dbReference>
<dbReference type="PDB" id="6BNU">
    <property type="method" value="EM"/>
    <property type="resolution" value="7.50 A"/>
    <property type="chains" value="A/B/C/D/E/F/G/H=1-373"/>
</dbReference>
<dbReference type="PDB" id="6BNV">
    <property type="method" value="EM"/>
    <property type="resolution" value="4.60 A"/>
    <property type="chains" value="A/B/C/D/E/F/G/H=1-373"/>
</dbReference>
<dbReference type="PDB" id="6BNW">
    <property type="method" value="EM"/>
    <property type="resolution" value="5.50 A"/>
    <property type="chains" value="A/B/C/D/E/F/G/H=1-373"/>
</dbReference>
<dbReference type="PDB" id="6C1D">
    <property type="method" value="EM"/>
    <property type="resolution" value="3.20 A"/>
    <property type="chains" value="A/B/C/D/E=3-377"/>
</dbReference>
<dbReference type="PDB" id="6C1G">
    <property type="method" value="EM"/>
    <property type="resolution" value="3.80 A"/>
    <property type="chains" value="A/B/C/D/E=3-377"/>
</dbReference>
<dbReference type="PDB" id="6C1H">
    <property type="method" value="EM"/>
    <property type="resolution" value="3.90 A"/>
    <property type="chains" value="A/B/C/D/E=3-377"/>
</dbReference>
<dbReference type="PDB" id="6FHL">
    <property type="method" value="EM"/>
    <property type="resolution" value="3.30 A"/>
    <property type="chains" value="A/B/C/D/E=3-377"/>
</dbReference>
<dbReference type="PDB" id="6FM2">
    <property type="method" value="X-ray"/>
    <property type="resolution" value="2.80 A"/>
    <property type="chains" value="A=3-377"/>
</dbReference>
<dbReference type="PDB" id="6GVC">
    <property type="method" value="X-ray"/>
    <property type="resolution" value="2.60 A"/>
    <property type="chains" value="A/B/C/D=1-377"/>
</dbReference>
<dbReference type="PDB" id="6JBK">
    <property type="method" value="X-ray"/>
    <property type="resolution" value="2.45 A"/>
    <property type="chains" value="A/C/E/G=1-377"/>
</dbReference>
<dbReference type="PDB" id="6JCU">
    <property type="method" value="X-ray"/>
    <property type="resolution" value="2.30 A"/>
    <property type="chains" value="A/C=1-377"/>
</dbReference>
<dbReference type="PDB" id="6JH8">
    <property type="method" value="X-ray"/>
    <property type="resolution" value="2.15 A"/>
    <property type="chains" value="A=1-377"/>
</dbReference>
<dbReference type="PDB" id="6JH9">
    <property type="method" value="X-ray"/>
    <property type="resolution" value="1.74 A"/>
    <property type="chains" value="A=1-377"/>
</dbReference>
<dbReference type="PDB" id="6KN7">
    <property type="method" value="EM"/>
    <property type="resolution" value="6.60 A"/>
    <property type="chains" value="A/B/C/D/E/F/G/H/I/J/K/L/M/N/O=3-377"/>
</dbReference>
<dbReference type="PDB" id="6KN8">
    <property type="method" value="EM"/>
    <property type="resolution" value="4.80 A"/>
    <property type="chains" value="A/B/C/D/E/F/G/H/I/J/K/L/M/N/O=3-377"/>
</dbReference>
<dbReference type="PDB" id="6MGO">
    <property type="method" value="X-ray"/>
    <property type="resolution" value="2.20 A"/>
    <property type="chains" value="A=1-377"/>
</dbReference>
<dbReference type="PDB" id="6NAS">
    <property type="method" value="X-ray"/>
    <property type="resolution" value="2.90 A"/>
    <property type="chains" value="A=3-377"/>
</dbReference>
<dbReference type="PDB" id="6NBE">
    <property type="method" value="X-ray"/>
    <property type="resolution" value="2.00 A"/>
    <property type="chains" value="A=3-377"/>
</dbReference>
<dbReference type="PDB" id="6QRI">
    <property type="method" value="X-ray"/>
    <property type="resolution" value="2.40 A"/>
    <property type="chains" value="A/B=1-377"/>
</dbReference>
<dbReference type="PDB" id="6RSW">
    <property type="method" value="X-ray"/>
    <property type="resolution" value="1.95 A"/>
    <property type="chains" value="A=3-377"/>
</dbReference>
<dbReference type="PDB" id="6T1Y">
    <property type="method" value="EM"/>
    <property type="resolution" value="3.30 A"/>
    <property type="chains" value="A/B/C/D/E=3-377"/>
</dbReference>
<dbReference type="PDB" id="6T20">
    <property type="method" value="EM"/>
    <property type="resolution" value="3.70 A"/>
    <property type="chains" value="A/B/C/D/E=3-377"/>
</dbReference>
<dbReference type="PDB" id="6T23">
    <property type="method" value="EM"/>
    <property type="resolution" value="3.10 A"/>
    <property type="chains" value="A/B/C/D/E=3-377"/>
</dbReference>
<dbReference type="PDB" id="6T24">
    <property type="method" value="EM"/>
    <property type="resolution" value="3.70 A"/>
    <property type="chains" value="A/B/C/D/E=3-377"/>
</dbReference>
<dbReference type="PDB" id="6T25">
    <property type="method" value="EM"/>
    <property type="resolution" value="3.60 A"/>
    <property type="chains" value="A/B/C/D/E=3-377"/>
</dbReference>
<dbReference type="PDB" id="6U96">
    <property type="method" value="EM"/>
    <property type="resolution" value="3.80 A"/>
    <property type="chains" value="A/B/C/D/E=1-377"/>
</dbReference>
<dbReference type="PDB" id="6UBY">
    <property type="method" value="EM"/>
    <property type="resolution" value="7.50 A"/>
    <property type="chains" value="A/B/C/D/E/F/G/H=1-377"/>
</dbReference>
<dbReference type="PDB" id="6UC0">
    <property type="method" value="EM"/>
    <property type="resolution" value="7.50 A"/>
    <property type="chains" value="A/B/C/D/E/F/G=1-377"/>
</dbReference>
<dbReference type="PDB" id="6UC4">
    <property type="method" value="EM"/>
    <property type="resolution" value="9.20 A"/>
    <property type="chains" value="A/B/C/D/E/F/G/H/J/K/L=1-377"/>
</dbReference>
<dbReference type="PDB" id="6VAO">
    <property type="method" value="EM"/>
    <property type="resolution" value="3.40 A"/>
    <property type="chains" value="A/B/C/D/E=1-377"/>
</dbReference>
<dbReference type="PDB" id="6VAU">
    <property type="method" value="EM"/>
    <property type="resolution" value="3.50 A"/>
    <property type="chains" value="A/B/C/D/E=1-377"/>
</dbReference>
<dbReference type="PDB" id="6VEC">
    <property type="method" value="EM"/>
    <property type="resolution" value="3.90 A"/>
    <property type="chains" value="A/B/C/D/E/F/G/H/I/J/K=1-377"/>
</dbReference>
<dbReference type="PDB" id="6W17">
    <property type="method" value="EM"/>
    <property type="resolution" value="3.90 A"/>
    <property type="chains" value="I/J/K/L=1-377"/>
</dbReference>
<dbReference type="PDB" id="6W7V">
    <property type="method" value="X-ray"/>
    <property type="resolution" value="1.70 A"/>
    <property type="chains" value="A=1-377"/>
</dbReference>
<dbReference type="PDB" id="6WVT">
    <property type="method" value="EM"/>
    <property type="resolution" value="3.56 A"/>
    <property type="chains" value="B/D/E/F/H/I=1-377"/>
</dbReference>
<dbReference type="PDB" id="6YP9">
    <property type="method" value="X-ray"/>
    <property type="resolution" value="2.56 A"/>
    <property type="chains" value="A=3-377"/>
</dbReference>
<dbReference type="PDB" id="7AD9">
    <property type="method" value="EM"/>
    <property type="resolution" value="3.50 A"/>
    <property type="chains" value="B/D/F/H/I=1-377"/>
</dbReference>
<dbReference type="PDB" id="7AHN">
    <property type="method" value="EM"/>
    <property type="resolution" value="2.90 A"/>
    <property type="chains" value="A/B/C/D/E=1-377"/>
</dbReference>
<dbReference type="PDB" id="7AHQ">
    <property type="method" value="EM"/>
    <property type="resolution" value="3.60 A"/>
    <property type="chains" value="A/B/C/D/E=1-377"/>
</dbReference>
<dbReference type="PDB" id="7C2F">
    <property type="method" value="X-ray"/>
    <property type="resolution" value="2.03 A"/>
    <property type="chains" value="A/C=3-377"/>
</dbReference>
<dbReference type="PDB" id="7C2G">
    <property type="method" value="X-ray"/>
    <property type="resolution" value="1.71 A"/>
    <property type="chains" value="A=1-377"/>
</dbReference>
<dbReference type="PDB" id="7C2H">
    <property type="method" value="X-ray"/>
    <property type="resolution" value="2.35 A"/>
    <property type="chains" value="A=1-377"/>
</dbReference>
<dbReference type="PDB" id="7CCC">
    <property type="method" value="X-ray"/>
    <property type="resolution" value="3.20 A"/>
    <property type="chains" value="A/E=1-377"/>
</dbReference>
<dbReference type="PDB" id="7NXV">
    <property type="method" value="X-ray"/>
    <property type="resolution" value="2.55 A"/>
    <property type="chains" value="A/D=3-377"/>
</dbReference>
<dbReference type="PDB" id="7NZM">
    <property type="method" value="EM"/>
    <property type="resolution" value="3.96 A"/>
    <property type="chains" value="A=3-377"/>
</dbReference>
<dbReference type="PDB" id="7P1G">
    <property type="method" value="EM"/>
    <property type="resolution" value="3.20 A"/>
    <property type="chains" value="A/B/C/D/E=1-377"/>
</dbReference>
<dbReference type="PDB" id="7PLT">
    <property type="method" value="EM"/>
    <property type="resolution" value="3.30 A"/>
    <property type="chains" value="C=1-377"/>
</dbReference>
<dbReference type="PDB" id="7PLU">
    <property type="method" value="EM"/>
    <property type="resolution" value="3.20 A"/>
    <property type="chains" value="C/F/G=1-377"/>
</dbReference>
<dbReference type="PDB" id="7PLV">
    <property type="method" value="EM"/>
    <property type="resolution" value="3.50 A"/>
    <property type="chains" value="C=1-377"/>
</dbReference>
<dbReference type="PDB" id="7PLW">
    <property type="method" value="EM"/>
    <property type="resolution" value="3.50 A"/>
    <property type="chains" value="C=1-377"/>
</dbReference>
<dbReference type="PDB" id="7PLX">
    <property type="method" value="EM"/>
    <property type="resolution" value="3.60 A"/>
    <property type="chains" value="C=1-377"/>
</dbReference>
<dbReference type="PDB" id="7PLY">
    <property type="method" value="EM"/>
    <property type="resolution" value="3.20 A"/>
    <property type="chains" value="C=1-377"/>
</dbReference>
<dbReference type="PDB" id="7PLZ">
    <property type="method" value="EM"/>
    <property type="resolution" value="3.20 A"/>
    <property type="chains" value="C/F/G=1-377"/>
</dbReference>
<dbReference type="PDB" id="7PM0">
    <property type="method" value="EM"/>
    <property type="resolution" value="3.60 A"/>
    <property type="chains" value="C=1-377"/>
</dbReference>
<dbReference type="PDB" id="7PM1">
    <property type="method" value="EM"/>
    <property type="resolution" value="3.50 A"/>
    <property type="chains" value="C=1-377"/>
</dbReference>
<dbReference type="PDB" id="7PM2">
    <property type="method" value="EM"/>
    <property type="resolution" value="3.60 A"/>
    <property type="chains" value="C=1-377"/>
</dbReference>
<dbReference type="PDB" id="7PM3">
    <property type="method" value="EM"/>
    <property type="resolution" value="3.10 A"/>
    <property type="chains" value="B/C/D=1-377"/>
</dbReference>
<dbReference type="PDB" id="7PM5">
    <property type="method" value="EM"/>
    <property type="resolution" value="3.10 A"/>
    <property type="chains" value="C=1-377"/>
</dbReference>
<dbReference type="PDB" id="7PM6">
    <property type="method" value="EM"/>
    <property type="resolution" value="3.00 A"/>
    <property type="chains" value="C/F/G=1-377"/>
</dbReference>
<dbReference type="PDB" id="7PM7">
    <property type="method" value="EM"/>
    <property type="resolution" value="3.50 A"/>
    <property type="chains" value="C=1-377"/>
</dbReference>
<dbReference type="PDB" id="7PM8">
    <property type="method" value="EM"/>
    <property type="resolution" value="3.50 A"/>
    <property type="chains" value="C=1-377"/>
</dbReference>
<dbReference type="PDB" id="7PM9">
    <property type="method" value="EM"/>
    <property type="resolution" value="3.70 A"/>
    <property type="chains" value="C=1-377"/>
</dbReference>
<dbReference type="PDB" id="7PMA">
    <property type="method" value="EM"/>
    <property type="resolution" value="3.60 A"/>
    <property type="chains" value="C=1-377"/>
</dbReference>
<dbReference type="PDB" id="7PMB">
    <property type="method" value="EM"/>
    <property type="resolution" value="3.60 A"/>
    <property type="chains" value="C=1-377"/>
</dbReference>
<dbReference type="PDB" id="7PMC">
    <property type="method" value="EM"/>
    <property type="resolution" value="3.70 A"/>
    <property type="chains" value="C=1-377"/>
</dbReference>
<dbReference type="PDB" id="7PMD">
    <property type="method" value="EM"/>
    <property type="resolution" value="2.90 A"/>
    <property type="chains" value="C=1-377"/>
</dbReference>
<dbReference type="PDB" id="7PME">
    <property type="method" value="EM"/>
    <property type="resolution" value="2.90 A"/>
    <property type="chains" value="C/F/G=1-377"/>
</dbReference>
<dbReference type="PDB" id="7PMF">
    <property type="method" value="EM"/>
    <property type="resolution" value="3.40 A"/>
    <property type="chains" value="C=1-377"/>
</dbReference>
<dbReference type="PDB" id="7PMG">
    <property type="method" value="EM"/>
    <property type="resolution" value="3.30 A"/>
    <property type="chains" value="C=1-377"/>
</dbReference>
<dbReference type="PDB" id="7PMH">
    <property type="method" value="EM"/>
    <property type="resolution" value="3.40 A"/>
    <property type="chains" value="C=1-377"/>
</dbReference>
<dbReference type="PDB" id="7PMI">
    <property type="method" value="EM"/>
    <property type="resolution" value="3.30 A"/>
    <property type="chains" value="C=1-377"/>
</dbReference>
<dbReference type="PDB" id="7PMJ">
    <property type="method" value="EM"/>
    <property type="resolution" value="3.40 A"/>
    <property type="chains" value="C=1-377"/>
</dbReference>
<dbReference type="PDB" id="7PML">
    <property type="method" value="EM"/>
    <property type="resolution" value="3.30 A"/>
    <property type="chains" value="C=1-377"/>
</dbReference>
<dbReference type="PDB" id="7T5Q">
    <property type="method" value="EM"/>
    <property type="resolution" value="3.40 A"/>
    <property type="chains" value="H=3-377"/>
</dbReference>
<dbReference type="PDB" id="7TPT">
    <property type="method" value="EM"/>
    <property type="resolution" value="3.90 A"/>
    <property type="chains" value="H/I/J/K/L/M/N/O/P/Q/R/S/T/U=1-377"/>
</dbReference>
<dbReference type="PDB" id="7U8K">
    <property type="method" value="NMR"/>
    <property type="chains" value="A/B/C/D/E/F/G/H/I/J=3-377"/>
</dbReference>
<dbReference type="PDB" id="7UTI">
    <property type="method" value="EM"/>
    <property type="resolution" value="4.80 A"/>
    <property type="chains" value="C/D/E/F/G/H/I/J/K/L/M/N/O/P/Q/R=1-377"/>
</dbReference>
<dbReference type="PDB" id="7UTJ">
    <property type="method" value="EM"/>
    <property type="resolution" value="2.77 A"/>
    <property type="chains" value="A/B/C/D/E/F=1-377"/>
</dbReference>
<dbReference type="PDB" id="7UTL">
    <property type="method" value="EM"/>
    <property type="resolution" value="6.60 A"/>
    <property type="chains" value="A/B/C/D/E/F/G/H/I/J/K/L/M/N/O/P/Q/R=1-377"/>
</dbReference>
<dbReference type="PDB" id="7UUW">
    <property type="method" value="EM"/>
    <property type="resolution" value="3.36 A"/>
    <property type="chains" value="A/B/C/D/E/F=1-377"/>
</dbReference>
<dbReference type="PDB" id="7UXF">
    <property type="method" value="EM"/>
    <property type="resolution" value="2.70 A"/>
    <property type="chains" value="A/B/C/D/E/F=1-377"/>
</dbReference>
<dbReference type="PDB" id="7WHF">
    <property type="method" value="X-ray"/>
    <property type="resolution" value="2.10 A"/>
    <property type="chains" value="A/B=1-377"/>
</dbReference>
<dbReference type="PDB" id="7WHG">
    <property type="method" value="X-ray"/>
    <property type="resolution" value="3.25 A"/>
    <property type="chains" value="A/B=1-377"/>
</dbReference>
<dbReference type="PDB" id="7Z7H">
    <property type="method" value="EM"/>
    <property type="resolution" value="3.80 A"/>
    <property type="chains" value="A/B/C/D/E=1-377"/>
</dbReference>
<dbReference type="PDB" id="7Z7I">
    <property type="method" value="EM"/>
    <property type="resolution" value="3.50 A"/>
    <property type="chains" value="A/B/C/D/E=1-377"/>
</dbReference>
<dbReference type="PDB" id="8A2R">
    <property type="method" value="EM"/>
    <property type="resolution" value="2.17 A"/>
    <property type="chains" value="A/B/C/D/E=3-377"/>
</dbReference>
<dbReference type="PDB" id="8A2S">
    <property type="method" value="EM"/>
    <property type="resolution" value="2.22 A"/>
    <property type="chains" value="A/B/C/D/E=3-377"/>
</dbReference>
<dbReference type="PDB" id="8A2T">
    <property type="method" value="EM"/>
    <property type="resolution" value="2.24 A"/>
    <property type="chains" value="A/B/C/D/E=3-377"/>
</dbReference>
<dbReference type="PDB" id="8A2U">
    <property type="method" value="EM"/>
    <property type="resolution" value="2.21 A"/>
    <property type="chains" value="A/B/C/D/E=3-377"/>
</dbReference>
<dbReference type="PDB" id="8A2Y">
    <property type="method" value="EM"/>
    <property type="resolution" value="2.15 A"/>
    <property type="chains" value="A/B/C/D/E=3-377"/>
</dbReference>
<dbReference type="PDB" id="8A2Z">
    <property type="method" value="EM"/>
    <property type="resolution" value="2.15 A"/>
    <property type="chains" value="A/B/C/D/E=3-377"/>
</dbReference>
<dbReference type="PDB" id="8BJH">
    <property type="method" value="X-ray"/>
    <property type="resolution" value="1.69 A"/>
    <property type="chains" value="A=3-377"/>
</dbReference>
<dbReference type="PDB" id="8BJI">
    <property type="method" value="X-ray"/>
    <property type="resolution" value="1.75 A"/>
    <property type="chains" value="A=3-377"/>
</dbReference>
<dbReference type="PDB" id="8BJJ">
    <property type="method" value="X-ray"/>
    <property type="resolution" value="1.70 A"/>
    <property type="chains" value="A=3-377"/>
</dbReference>
<dbReference type="PDB" id="8BO1">
    <property type="method" value="X-ray"/>
    <property type="resolution" value="2.50 A"/>
    <property type="chains" value="A/C=3-377"/>
</dbReference>
<dbReference type="PDB" id="8BR0">
    <property type="method" value="X-ray"/>
    <property type="resolution" value="2.22 A"/>
    <property type="chains" value="A/C=3-377"/>
</dbReference>
<dbReference type="PDB" id="8BR1">
    <property type="method" value="X-ray"/>
    <property type="resolution" value="2.04 A"/>
    <property type="chains" value="A/C=3-377"/>
</dbReference>
<dbReference type="PDB" id="8DMX">
    <property type="method" value="EM"/>
    <property type="resolution" value="3.37 A"/>
    <property type="chains" value="A/B/C/D=3-377"/>
</dbReference>
<dbReference type="PDB" id="8F8P">
    <property type="method" value="EM"/>
    <property type="resolution" value="2.26 A"/>
    <property type="chains" value="A/B/C/D/E=1-377"/>
</dbReference>
<dbReference type="PDB" id="8F8Q">
    <property type="method" value="EM"/>
    <property type="resolution" value="2.79 A"/>
    <property type="chains" value="A/B/C/D/E/F=1-377"/>
</dbReference>
<dbReference type="PDB" id="8F8R">
    <property type="method" value="EM"/>
    <property type="resolution" value="3.30 A"/>
    <property type="chains" value="A/B/C/D/E/F/G=1-377"/>
</dbReference>
<dbReference type="PDB" id="8F8S">
    <property type="method" value="EM"/>
    <property type="resolution" value="2.84 A"/>
    <property type="chains" value="A/B/C/D/E/F/G=1-377"/>
</dbReference>
<dbReference type="PDB" id="8F8T">
    <property type="method" value="EM"/>
    <property type="resolution" value="3.26 A"/>
    <property type="chains" value="A/B/C/D/E/F/G=1-377"/>
</dbReference>
<dbReference type="PDB" id="8JO3">
    <property type="method" value="EM"/>
    <property type="resolution" value="2.66 A"/>
    <property type="chains" value="B=1-377"/>
</dbReference>
<dbReference type="PDB" id="8JO4">
    <property type="method" value="EM"/>
    <property type="resolution" value="3.04 A"/>
    <property type="chains" value="B=1-377"/>
</dbReference>
<dbReference type="PDB" id="8OF8">
    <property type="method" value="EM"/>
    <property type="resolution" value="7.50 A"/>
    <property type="chains" value="J/K/L=3-377"/>
</dbReference>
<dbReference type="PDB" id="8PVX">
    <property type="method" value="EM"/>
    <property type="resolution" value="3.55 A"/>
    <property type="chains" value="A/B/C/D/E=1-377"/>
</dbReference>
<dbReference type="PDB" id="8R9V">
    <property type="method" value="EM"/>
    <property type="resolution" value="4.40 A"/>
    <property type="chains" value="B/C/D=3-377"/>
</dbReference>
<dbReference type="PDB" id="8RBF">
    <property type="method" value="EM"/>
    <property type="resolution" value="4.20 A"/>
    <property type="chains" value="B/C/D=3-377"/>
</dbReference>
<dbReference type="PDB" id="8RU0">
    <property type="method" value="EM"/>
    <property type="resolution" value="3.08 A"/>
    <property type="chains" value="A/B/C/D=3-377"/>
</dbReference>
<dbReference type="PDB" id="8RV2">
    <property type="method" value="EM"/>
    <property type="resolution" value="3.41 A"/>
    <property type="chains" value="A/B/C/D=3-377"/>
</dbReference>
<dbReference type="PDB" id="8UEE">
    <property type="method" value="EM"/>
    <property type="resolution" value="3.20 A"/>
    <property type="chains" value="F/H/I/J/K/L/M=3-377"/>
</dbReference>
<dbReference type="PDB" id="8VIZ">
    <property type="method" value="EM"/>
    <property type="resolution" value="2.63 A"/>
    <property type="chains" value="A/B/C/D/E/F=3-377"/>
</dbReference>
<dbReference type="PDB" id="8VKH">
    <property type="method" value="EM"/>
    <property type="resolution" value="3.63 A"/>
    <property type="chains" value="A/B/C/D/E/F=3-377"/>
</dbReference>
<dbReference type="PDB" id="8W36">
    <property type="method" value="EM"/>
    <property type="resolution" value="2.27 A"/>
    <property type="chains" value="A/B/C/D/E=7-377"/>
</dbReference>
<dbReference type="PDB" id="8XDL">
    <property type="method" value="EM"/>
    <property type="resolution" value="2.44 A"/>
    <property type="chains" value="A/B/C=1-377"/>
</dbReference>
<dbReference type="PDB" id="8XDM">
    <property type="method" value="EM"/>
    <property type="resolution" value="2.45 A"/>
    <property type="chains" value="A/B/C=1-377"/>
</dbReference>
<dbReference type="PDB" id="9AZ4">
    <property type="method" value="EM"/>
    <property type="resolution" value="3.37 A"/>
    <property type="chains" value="A/B/C/D/E/F=7-377"/>
</dbReference>
<dbReference type="PDB" id="9AZ6">
    <property type="method" value="EM"/>
    <property type="resolution" value="2.98 A"/>
    <property type="chains" value="A/B/C/D/E=3-377"/>
</dbReference>
<dbReference type="PDB" id="9AZP">
    <property type="method" value="EM"/>
    <property type="resolution" value="3.79 A"/>
    <property type="chains" value="A/B/C/D/E/F/I=7-377"/>
</dbReference>
<dbReference type="PDB" id="9AZQ">
    <property type="method" value="EM"/>
    <property type="resolution" value="3.82 A"/>
    <property type="chains" value="A/B/C/D/E/F/I=7-377"/>
</dbReference>
<dbReference type="PDB" id="9B03">
    <property type="method" value="EM"/>
    <property type="resolution" value="2.95 A"/>
    <property type="chains" value="A/B/C/D/E/F=7-377"/>
</dbReference>
<dbReference type="PDB" id="9B0K">
    <property type="method" value="EM"/>
    <property type="resolution" value="3.03 A"/>
    <property type="chains" value="A/B/C/D/E/F=7-377"/>
</dbReference>
<dbReference type="PDB" id="9B27">
    <property type="method" value="EM"/>
    <property type="resolution" value="3.51 A"/>
    <property type="chains" value="A/B/C/D/E/F=7-377"/>
</dbReference>
<dbReference type="PDB" id="9B3D">
    <property type="method" value="EM"/>
    <property type="resolution" value="3.41 A"/>
    <property type="chains" value="A/B/C/D/E/F=7-377"/>
</dbReference>
<dbReference type="PDB" id="9CFU">
    <property type="method" value="EM"/>
    <property type="resolution" value="2.80 A"/>
    <property type="chains" value="B/C/D=3-377"/>
</dbReference>
<dbReference type="PDB" id="9CFV">
    <property type="method" value="EM"/>
    <property type="resolution" value="2.70 A"/>
    <property type="chains" value="B/C/D=3-377"/>
</dbReference>
<dbReference type="PDB" id="9CFW">
    <property type="method" value="EM"/>
    <property type="resolution" value="3.00 A"/>
    <property type="chains" value="B/C/D=3-377"/>
</dbReference>
<dbReference type="PDB" id="9CFX">
    <property type="method" value="EM"/>
    <property type="resolution" value="2.70 A"/>
    <property type="chains" value="B/C/D=3-377"/>
</dbReference>
<dbReference type="PDB" id="9FJO">
    <property type="method" value="EM"/>
    <property type="resolution" value="3.05 A"/>
    <property type="chains" value="A/B/C/D=3-377"/>
</dbReference>
<dbReference type="PDB" id="9GOB">
    <property type="method" value="EM"/>
    <property type="resolution" value="3.20 A"/>
    <property type="chains" value="A/B/C/D/E=4-377"/>
</dbReference>
<dbReference type="PDB" id="9HM9">
    <property type="method" value="EM"/>
    <property type="resolution" value="3.40 A"/>
    <property type="chains" value="A/B/C/D/E=4-377"/>
</dbReference>
<dbReference type="PDBsum" id="1ATN"/>
<dbReference type="PDBsum" id="1EQY"/>
<dbReference type="PDBsum" id="1ESV"/>
<dbReference type="PDBsum" id="1H1V"/>
<dbReference type="PDBsum" id="1IJJ"/>
<dbReference type="PDBsum" id="1J6Z"/>
<dbReference type="PDBsum" id="1KXP"/>
<dbReference type="PDBsum" id="1LCU"/>
<dbReference type="PDBsum" id="1LOT"/>
<dbReference type="PDBsum" id="1M8Q"/>
<dbReference type="PDBsum" id="1MA9"/>
<dbReference type="PDBsum" id="1MVW"/>
<dbReference type="PDBsum" id="1NWK"/>
<dbReference type="PDBsum" id="1O18"/>
<dbReference type="PDBsum" id="1O19"/>
<dbReference type="PDBsum" id="1O1A"/>
<dbReference type="PDBsum" id="1O1B"/>
<dbReference type="PDBsum" id="1O1C"/>
<dbReference type="PDBsum" id="1O1D"/>
<dbReference type="PDBsum" id="1O1E"/>
<dbReference type="PDBsum" id="1O1F"/>
<dbReference type="PDBsum" id="1O1G"/>
<dbReference type="PDBsum" id="1P8Z"/>
<dbReference type="PDBsum" id="1QZ5"/>
<dbReference type="PDBsum" id="1QZ6"/>
<dbReference type="PDBsum" id="1RDW"/>
<dbReference type="PDBsum" id="1RFQ"/>
<dbReference type="PDBsum" id="1RGI"/>
<dbReference type="PDBsum" id="1S22"/>
<dbReference type="PDBsum" id="1SQK"/>
<dbReference type="PDBsum" id="1T44"/>
<dbReference type="PDBsum" id="1WUA"/>
<dbReference type="PDBsum" id="1Y64"/>
<dbReference type="PDBsum" id="1YXQ"/>
<dbReference type="PDBsum" id="2A3Z"/>
<dbReference type="PDBsum" id="2A40"/>
<dbReference type="PDBsum" id="2A41"/>
<dbReference type="PDBsum" id="2A42"/>
<dbReference type="PDBsum" id="2A5X"/>
<dbReference type="PDBsum" id="2ASM"/>
<dbReference type="PDBsum" id="2ASO"/>
<dbReference type="PDBsum" id="2ASP"/>
<dbReference type="PDBsum" id="2D1K"/>
<dbReference type="PDBsum" id="2FF3"/>
<dbReference type="PDBsum" id="2FF6"/>
<dbReference type="PDBsum" id="2FXU"/>
<dbReference type="PDBsum" id="2GWJ"/>
<dbReference type="PDBsum" id="2GWK"/>
<dbReference type="PDBsum" id="2HMP"/>
<dbReference type="PDBsum" id="2PAV"/>
<dbReference type="PDBsum" id="2PBD"/>
<dbReference type="PDBsum" id="2Q0R"/>
<dbReference type="PDBsum" id="2Q0U"/>
<dbReference type="PDBsum" id="2Q1N"/>
<dbReference type="PDBsum" id="2Q31"/>
<dbReference type="PDBsum" id="2Q36"/>
<dbReference type="PDBsum" id="2Q97"/>
<dbReference type="PDBsum" id="2V51"/>
<dbReference type="PDBsum" id="2V52"/>
<dbReference type="PDBsum" id="2VCP"/>
<dbReference type="PDBsum" id="2VYP"/>
<dbReference type="PDBsum" id="2W49"/>
<dbReference type="PDBsum" id="2W4U"/>
<dbReference type="PDBsum" id="2Y83"/>
<dbReference type="PDBsum" id="2YJE"/>
<dbReference type="PDBsum" id="2YJF"/>
<dbReference type="PDBsum" id="2ZWH"/>
<dbReference type="PDBsum" id="3B5U"/>
<dbReference type="PDBsum" id="3BUZ"/>
<dbReference type="PDBsum" id="3CJB"/>
<dbReference type="PDBsum" id="3CJC"/>
<dbReference type="PDBsum" id="3DAW"/>
<dbReference type="PDBsum" id="3FFK"/>
<dbReference type="PDBsum" id="3G37"/>
<dbReference type="PDBsum" id="3HBT"/>
<dbReference type="PDBsum" id="3J4K"/>
<dbReference type="PDBsum" id="3J8A"/>
<dbReference type="PDBsum" id="3J8I"/>
<dbReference type="PDBsum" id="3J8J"/>
<dbReference type="PDBsum" id="3J8K"/>
<dbReference type="PDBsum" id="3JBI"/>
<dbReference type="PDBsum" id="3JBJ"/>
<dbReference type="PDBsum" id="3JBK"/>
<dbReference type="PDBsum" id="3M1F"/>
<dbReference type="PDBsum" id="3M3N"/>
<dbReference type="PDBsum" id="3M6G"/>
<dbReference type="PDBsum" id="3MFP"/>
<dbReference type="PDBsum" id="3MN5"/>
<dbReference type="PDBsum" id="3SJH"/>
<dbReference type="PDBsum" id="3TPQ"/>
<dbReference type="PDBsum" id="3TU5"/>
<dbReference type="PDBsum" id="3U8X"/>
<dbReference type="PDBsum" id="3U9Z"/>
<dbReference type="PDBsum" id="3UE5"/>
<dbReference type="PDBsum" id="4A7F"/>
<dbReference type="PDBsum" id="4A7H"/>
<dbReference type="PDBsum" id="4A7L"/>
<dbReference type="PDBsum" id="4A7N"/>
<dbReference type="PDBsum" id="4B1V"/>
<dbReference type="PDBsum" id="4B1W"/>
<dbReference type="PDBsum" id="4B1X"/>
<dbReference type="PDBsum" id="4B1Y"/>
<dbReference type="PDBsum" id="4B1Z"/>
<dbReference type="PDBsum" id="4EAH"/>
<dbReference type="PDBsum" id="4GY2"/>
<dbReference type="PDBsum" id="4H03"/>
<dbReference type="PDBsum" id="4H0T"/>
<dbReference type="PDBsum" id="4H0V"/>
<dbReference type="PDBsum" id="4H0X"/>
<dbReference type="PDBsum" id="4H0Y"/>
<dbReference type="PDBsum" id="4K41"/>
<dbReference type="PDBsum" id="4K42"/>
<dbReference type="PDBsum" id="4K43"/>
<dbReference type="PDBsum" id="4PKG"/>
<dbReference type="PDBsum" id="4PKH"/>
<dbReference type="PDBsum" id="4PKI"/>
<dbReference type="PDBsum" id="4PL8"/>
<dbReference type="PDBsum" id="4V0U"/>
<dbReference type="PDBsum" id="4WYB"/>
<dbReference type="PDBsum" id="4Z94"/>
<dbReference type="PDBsum" id="5H53"/>
<dbReference type="PDBsum" id="5JLF"/>
<dbReference type="PDBsum" id="5KG8"/>
<dbReference type="PDBsum" id="5MVA"/>
<dbReference type="PDBsum" id="5MVY"/>
<dbReference type="PDBsum" id="5ONV"/>
<dbReference type="PDBsum" id="5OOC"/>
<dbReference type="PDBsum" id="5OOD"/>
<dbReference type="PDBsum" id="5OOE"/>
<dbReference type="PDBsum" id="5OOF"/>
<dbReference type="PDBsum" id="5UBO"/>
<dbReference type="PDBsum" id="5YEE"/>
<dbReference type="PDBsum" id="5YPU"/>
<dbReference type="PDBsum" id="5ZZA"/>
<dbReference type="PDBsum" id="5ZZB"/>
<dbReference type="PDBsum" id="6AV9"/>
<dbReference type="PDBsum" id="6AVB"/>
<dbReference type="PDBsum" id="6BIH"/>
<dbReference type="PDBsum" id="6BNO"/>
<dbReference type="PDBsum" id="6BNP"/>
<dbReference type="PDBsum" id="6BNQ"/>
<dbReference type="PDBsum" id="6BNU"/>
<dbReference type="PDBsum" id="6BNV"/>
<dbReference type="PDBsum" id="6BNW"/>
<dbReference type="PDBsum" id="6C1D"/>
<dbReference type="PDBsum" id="6C1G"/>
<dbReference type="PDBsum" id="6C1H"/>
<dbReference type="PDBsum" id="6FHL"/>
<dbReference type="PDBsum" id="6FM2"/>
<dbReference type="PDBsum" id="6GVC"/>
<dbReference type="PDBsum" id="6JBK"/>
<dbReference type="PDBsum" id="6JCU"/>
<dbReference type="PDBsum" id="6JH8"/>
<dbReference type="PDBsum" id="6JH9"/>
<dbReference type="PDBsum" id="6KN7"/>
<dbReference type="PDBsum" id="6KN8"/>
<dbReference type="PDBsum" id="6MGO"/>
<dbReference type="PDBsum" id="6NAS"/>
<dbReference type="PDBsum" id="6NBE"/>
<dbReference type="PDBsum" id="6QRI"/>
<dbReference type="PDBsum" id="6RSW"/>
<dbReference type="PDBsum" id="6T1Y"/>
<dbReference type="PDBsum" id="6T20"/>
<dbReference type="PDBsum" id="6T23"/>
<dbReference type="PDBsum" id="6T24"/>
<dbReference type="PDBsum" id="6T25"/>
<dbReference type="PDBsum" id="6U96"/>
<dbReference type="PDBsum" id="6UBY"/>
<dbReference type="PDBsum" id="6UC0"/>
<dbReference type="PDBsum" id="6UC4"/>
<dbReference type="PDBsum" id="6VAO"/>
<dbReference type="PDBsum" id="6VAU"/>
<dbReference type="PDBsum" id="6VEC"/>
<dbReference type="PDBsum" id="6W17"/>
<dbReference type="PDBsum" id="6W7V"/>
<dbReference type="PDBsum" id="6WVT"/>
<dbReference type="PDBsum" id="6YP9"/>
<dbReference type="PDBsum" id="7AD9"/>
<dbReference type="PDBsum" id="7AHN"/>
<dbReference type="PDBsum" id="7AHQ"/>
<dbReference type="PDBsum" id="7C2F"/>
<dbReference type="PDBsum" id="7C2G"/>
<dbReference type="PDBsum" id="7C2H"/>
<dbReference type="PDBsum" id="7CCC"/>
<dbReference type="PDBsum" id="7NXV"/>
<dbReference type="PDBsum" id="7NZM"/>
<dbReference type="PDBsum" id="7P1G"/>
<dbReference type="PDBsum" id="7PLT"/>
<dbReference type="PDBsum" id="7PLU"/>
<dbReference type="PDBsum" id="7PLV"/>
<dbReference type="PDBsum" id="7PLW"/>
<dbReference type="PDBsum" id="7PLX"/>
<dbReference type="PDBsum" id="7PLY"/>
<dbReference type="PDBsum" id="7PLZ"/>
<dbReference type="PDBsum" id="7PM0"/>
<dbReference type="PDBsum" id="7PM1"/>
<dbReference type="PDBsum" id="7PM2"/>
<dbReference type="PDBsum" id="7PM3"/>
<dbReference type="PDBsum" id="7PM5"/>
<dbReference type="PDBsum" id="7PM6"/>
<dbReference type="PDBsum" id="7PM7"/>
<dbReference type="PDBsum" id="7PM8"/>
<dbReference type="PDBsum" id="7PM9"/>
<dbReference type="PDBsum" id="7PMA"/>
<dbReference type="PDBsum" id="7PMB"/>
<dbReference type="PDBsum" id="7PMC"/>
<dbReference type="PDBsum" id="7PMD"/>
<dbReference type="PDBsum" id="7PME"/>
<dbReference type="PDBsum" id="7PMF"/>
<dbReference type="PDBsum" id="7PMG"/>
<dbReference type="PDBsum" id="7PMH"/>
<dbReference type="PDBsum" id="7PMI"/>
<dbReference type="PDBsum" id="7PMJ"/>
<dbReference type="PDBsum" id="7PML"/>
<dbReference type="PDBsum" id="7T5Q"/>
<dbReference type="PDBsum" id="7TPT"/>
<dbReference type="PDBsum" id="7U8K"/>
<dbReference type="PDBsum" id="7UTI"/>
<dbReference type="PDBsum" id="7UTJ"/>
<dbReference type="PDBsum" id="7UTL"/>
<dbReference type="PDBsum" id="7UUW"/>
<dbReference type="PDBsum" id="7UXF"/>
<dbReference type="PDBsum" id="7WHF"/>
<dbReference type="PDBsum" id="7WHG"/>
<dbReference type="PDBsum" id="7Z7H"/>
<dbReference type="PDBsum" id="7Z7I"/>
<dbReference type="PDBsum" id="8A2R"/>
<dbReference type="PDBsum" id="8A2S"/>
<dbReference type="PDBsum" id="8A2T"/>
<dbReference type="PDBsum" id="8A2U"/>
<dbReference type="PDBsum" id="8A2Y"/>
<dbReference type="PDBsum" id="8A2Z"/>
<dbReference type="PDBsum" id="8BJH"/>
<dbReference type="PDBsum" id="8BJI"/>
<dbReference type="PDBsum" id="8BJJ"/>
<dbReference type="PDBsum" id="8BO1"/>
<dbReference type="PDBsum" id="8BR0"/>
<dbReference type="PDBsum" id="8BR1"/>
<dbReference type="PDBsum" id="8DMX"/>
<dbReference type="PDBsum" id="8F8P"/>
<dbReference type="PDBsum" id="8F8Q"/>
<dbReference type="PDBsum" id="8F8R"/>
<dbReference type="PDBsum" id="8F8S"/>
<dbReference type="PDBsum" id="8F8T"/>
<dbReference type="PDBsum" id="8JO3"/>
<dbReference type="PDBsum" id="8JO4"/>
<dbReference type="PDBsum" id="8OF8"/>
<dbReference type="PDBsum" id="8PVX"/>
<dbReference type="PDBsum" id="8R9V"/>
<dbReference type="PDBsum" id="8RBF"/>
<dbReference type="PDBsum" id="8RU0"/>
<dbReference type="PDBsum" id="8RV2"/>
<dbReference type="PDBsum" id="8UEE"/>
<dbReference type="PDBsum" id="8VIZ"/>
<dbReference type="PDBsum" id="8VKH"/>
<dbReference type="PDBsum" id="8W36"/>
<dbReference type="PDBsum" id="8XDL"/>
<dbReference type="PDBsum" id="8XDM"/>
<dbReference type="PDBsum" id="9AZ4"/>
<dbReference type="PDBsum" id="9AZ6"/>
<dbReference type="PDBsum" id="9AZP"/>
<dbReference type="PDBsum" id="9AZQ"/>
<dbReference type="PDBsum" id="9B03"/>
<dbReference type="PDBsum" id="9B0K"/>
<dbReference type="PDBsum" id="9B27"/>
<dbReference type="PDBsum" id="9B3D"/>
<dbReference type="PDBsum" id="9CFU"/>
<dbReference type="PDBsum" id="9CFV"/>
<dbReference type="PDBsum" id="9CFW"/>
<dbReference type="PDBsum" id="9CFX"/>
<dbReference type="PDBsum" id="9FJO"/>
<dbReference type="PDBsum" id="9GOB"/>
<dbReference type="PDBsum" id="9HM9"/>
<dbReference type="EMDB" id="EMD-0728"/>
<dbReference type="EMDB" id="EMD-0729"/>
<dbReference type="EMDB" id="EMD-10363"/>
<dbReference type="EMDB" id="EMD-10364"/>
<dbReference type="EMDB" id="EMD-10365"/>
<dbReference type="EMDB" id="EMD-10366"/>
<dbReference type="EMDB" id="EMD-10367"/>
<dbReference type="EMDB" id="EMD-10737"/>
<dbReference type="EMDB" id="EMD-1088"/>
<dbReference type="EMDB" id="EMD-11721"/>
<dbReference type="EMDB" id="EMD-11787"/>
<dbReference type="EMDB" id="EMD-11790"/>
<dbReference type="EMDB" id="EMD-12665"/>
<dbReference type="EMDB" id="EMD-13158"/>
<dbReference type="EMDB" id="EMD-13160"/>
<dbReference type="EMDB" id="EMD-13501"/>
<dbReference type="EMDB" id="EMD-13502"/>
<dbReference type="EMDB" id="EMD-13503"/>
<dbReference type="EMDB" id="EMD-13504"/>
<dbReference type="EMDB" id="EMD-13505"/>
<dbReference type="EMDB" id="EMD-13506"/>
<dbReference type="EMDB" id="EMD-13507"/>
<dbReference type="EMDB" id="EMD-13508"/>
<dbReference type="EMDB" id="EMD-13509"/>
<dbReference type="EMDB" id="EMD-13510"/>
<dbReference type="EMDB" id="EMD-13511"/>
<dbReference type="EMDB" id="EMD-13521"/>
<dbReference type="EMDB" id="EMD-13522"/>
<dbReference type="EMDB" id="EMD-13523"/>
<dbReference type="EMDB" id="EMD-13524"/>
<dbReference type="EMDB" id="EMD-13525"/>
<dbReference type="EMDB" id="EMD-13526"/>
<dbReference type="EMDB" id="EMD-13527"/>
<dbReference type="EMDB" id="EMD-13528"/>
<dbReference type="EMDB" id="EMD-13529"/>
<dbReference type="EMDB" id="EMD-13530"/>
<dbReference type="EMDB" id="EMD-13531"/>
<dbReference type="EMDB" id="EMD-13532"/>
<dbReference type="EMDB" id="EMD-13533"/>
<dbReference type="EMDB" id="EMD-13535"/>
<dbReference type="EMDB" id="EMD-13536"/>
<dbReference type="EMDB" id="EMD-13538"/>
<dbReference type="EMDB" id="EMD-14532"/>
<dbReference type="EMDB" id="EMD-14533"/>
<dbReference type="EMDB" id="EMD-15104"/>
<dbReference type="EMDB" id="EMD-15105"/>
<dbReference type="EMDB" id="EMD-15106"/>
<dbReference type="EMDB" id="EMD-15107"/>
<dbReference type="EMDB" id="EMD-15108"/>
<dbReference type="EMDB" id="EMD-15109"/>
<dbReference type="EMDB" id="EMD-1674"/>
<dbReference type="EMDB" id="EMD-16850"/>
<dbReference type="EMDB" id="EMD-17979"/>
<dbReference type="EMDB" id="EMD-1872"/>
<dbReference type="EMDB" id="EMD-19013"/>
<dbReference type="EMDB" id="EMD-19030"/>
<dbReference type="EMDB" id="EMD-19501"/>
<dbReference type="EMDB" id="EMD-19522"/>
<dbReference type="EMDB" id="EMD-1987"/>
<dbReference type="EMDB" id="EMD-1988"/>
<dbReference type="EMDB" id="EMD-1989"/>
<dbReference type="EMDB" id="EMD-1990"/>
<dbReference type="EMDB" id="EMD-20694"/>
<dbReference type="EMDB" id="EMD-20711"/>
<dbReference type="EMDB" id="EMD-20719"/>
<dbReference type="EMDB" id="EMD-20721"/>
<dbReference type="EMDB" id="EMD-20724"/>
<dbReference type="EMDB" id="EMD-20726"/>
<dbReference type="EMDB" id="EMD-21155"/>
<dbReference type="EMDB" id="EMD-21502"/>
<dbReference type="EMDB" id="EMD-21925"/>
<dbReference type="EMDB" id="EMD-25707"/>
<dbReference type="EMDB" id="EMD-26063"/>
<dbReference type="EMDB" id="EMD-26772"/>
<dbReference type="EMDB" id="EMD-26805"/>
<dbReference type="EMDB" id="EMD-26860"/>
<dbReference type="EMDB" id="EMD-27548"/>
<dbReference type="EMDB" id="EMD-28932"/>
<dbReference type="EMDB" id="EMD-28933"/>
<dbReference type="EMDB" id="EMD-28934"/>
<dbReference type="EMDB" id="EMD-28935"/>
<dbReference type="EMDB" id="EMD-28936"/>
<dbReference type="EMDB" id="EMD-3576"/>
<dbReference type="EMDB" id="EMD-3578"/>
<dbReference type="EMDB" id="EMD-36454"/>
<dbReference type="EMDB" id="EMD-36455"/>
<dbReference type="EMDB" id="EMD-38280"/>
<dbReference type="EMDB" id="EMD-38281"/>
<dbReference type="EMDB" id="EMD-3835"/>
<dbReference type="EMDB" id="EMD-3836"/>
<dbReference type="EMDB" id="EMD-3837"/>
<dbReference type="EMDB" id="EMD-3838"/>
<dbReference type="EMDB" id="EMD-3839"/>
<dbReference type="EMDB" id="EMD-42161"/>
<dbReference type="EMDB" id="EMD-4259"/>
<dbReference type="EMDB" id="EMD-42787"/>
<dbReference type="EMDB" id="EMD-42788"/>
<dbReference type="EMDB" id="EMD-42829"/>
<dbReference type="EMDB" id="EMD-42830"/>
<dbReference type="EMDB" id="EMD-43262"/>
<dbReference type="EMDB" id="EMD-43263"/>
<dbReference type="EMDB" id="EMD-43264"/>
<dbReference type="EMDB" id="EMD-43268"/>
<dbReference type="EMDB" id="EMD-43274"/>
<dbReference type="EMDB" id="EMD-43316"/>
<dbReference type="EMDB" id="EMD-43763"/>
<dbReference type="EMDB" id="EMD-44009"/>
<dbReference type="EMDB" id="EMD-44010"/>
<dbReference type="EMDB" id="EMD-44011"/>
<dbReference type="EMDB" id="EMD-44012"/>
<dbReference type="EMDB" id="EMD-44013"/>
<dbReference type="EMDB" id="EMD-44018"/>
<dbReference type="EMDB" id="EMD-44019"/>
<dbReference type="EMDB" id="EMD-44020"/>
<dbReference type="EMDB" id="EMD-44022"/>
<dbReference type="EMDB" id="EMD-44026"/>
<dbReference type="EMDB" id="EMD-44045"/>
<dbReference type="EMDB" id="EMD-44099"/>
<dbReference type="EMDB" id="EMD-44135"/>
<dbReference type="EMDB" id="EMD-45563"/>
<dbReference type="EMDB" id="EMD-45564"/>
<dbReference type="EMDB" id="EMD-45565"/>
<dbReference type="EMDB" id="EMD-45566"/>
<dbReference type="EMDB" id="EMD-48238"/>
<dbReference type="EMDB" id="EMD-48243"/>
<dbReference type="EMDB" id="EMD-50507"/>
<dbReference type="EMDB" id="EMD-50594"/>
<dbReference type="EMDB" id="EMD-51496"/>
<dbReference type="EMDB" id="EMD-5168"/>
<dbReference type="EMDB" id="EMD-52289"/>
<dbReference type="EMDB" id="EMD-5751"/>
<dbReference type="EMDB" id="EMD-5752"/>
<dbReference type="EMDB" id="EMD-6100"/>
<dbReference type="EMDB" id="EMD-6101"/>
<dbReference type="EMDB" id="EMD-6124"/>
<dbReference type="EMDB" id="EMD-6179"/>
<dbReference type="EMDB" id="EMD-6180"/>
<dbReference type="EMDB" id="EMD-6181"/>
<dbReference type="EMDB" id="EMD-6446"/>
<dbReference type="EMDB" id="EMD-6447"/>
<dbReference type="EMDB" id="EMD-6448"/>
<dbReference type="EMDB" id="EMD-6449"/>
<dbReference type="EMDB" id="EMD-6450"/>
<dbReference type="EMDB" id="EMD-6451"/>
<dbReference type="EMDB" id="EMD-6664"/>
<dbReference type="EMDB" id="EMD-7007"/>
<dbReference type="EMDB" id="EMD-7008"/>
<dbReference type="EMDB" id="EMD-7100"/>
<dbReference type="EMDB" id="EMD-7115"/>
<dbReference type="EMDB" id="EMD-7116"/>
<dbReference type="EMDB" id="EMD-7117"/>
<dbReference type="EMDB" id="EMD-7329"/>
<dbReference type="EMDB" id="EMD-7330"/>
<dbReference type="EMDB" id="EMD-7331"/>
<dbReference type="EMDB" id="EMD-8162"/>
<dbReference type="EMDB" id="EMD-8163"/>
<dbReference type="EMDB" id="EMD-8244"/>
<dbReference type="SASBDB" id="P68135"/>
<dbReference type="SMR" id="P68135"/>
<dbReference type="CORUM" id="P68135"/>
<dbReference type="DIP" id="DIP-29021N"/>
<dbReference type="ELM" id="P68135"/>
<dbReference type="FunCoup" id="P68135">
    <property type="interactions" value="106"/>
</dbReference>
<dbReference type="IntAct" id="P68135">
    <property type="interactions" value="88"/>
</dbReference>
<dbReference type="MINT" id="P68135"/>
<dbReference type="STRING" id="9986.ENSOCUP00000006542"/>
<dbReference type="BindingDB" id="P68135"/>
<dbReference type="ChEMBL" id="CHEMBL4523260"/>
<dbReference type="CarbonylDB" id="P68135"/>
<dbReference type="iPTMnet" id="P68135"/>
<dbReference type="MetOSite" id="P68135"/>
<dbReference type="PaxDb" id="9986-ENSOCUP00000006542"/>
<dbReference type="GeneID" id="100009506"/>
<dbReference type="eggNOG" id="KOG0676">
    <property type="taxonomic scope" value="Eukaryota"/>
</dbReference>
<dbReference type="InParanoid" id="P68135"/>
<dbReference type="OrthoDB" id="9545632at2759"/>
<dbReference type="SABIO-RK" id="P68135"/>
<dbReference type="EvolutionaryTrace" id="P68135"/>
<dbReference type="Proteomes" id="UP000001811">
    <property type="component" value="Unplaced"/>
</dbReference>
<dbReference type="GO" id="GO:0005884">
    <property type="term" value="C:actin filament"/>
    <property type="evidence" value="ECO:0000314"/>
    <property type="project" value="CAFA"/>
</dbReference>
<dbReference type="GO" id="GO:0032432">
    <property type="term" value="C:actin filament bundle"/>
    <property type="evidence" value="ECO:0000314"/>
    <property type="project" value="CAFA"/>
</dbReference>
<dbReference type="GO" id="GO:0044297">
    <property type="term" value="C:cell body"/>
    <property type="evidence" value="ECO:0000250"/>
    <property type="project" value="AgBase"/>
</dbReference>
<dbReference type="GO" id="GO:0005737">
    <property type="term" value="C:cytoplasm"/>
    <property type="evidence" value="ECO:0000250"/>
    <property type="project" value="AgBase"/>
</dbReference>
<dbReference type="GO" id="GO:0031941">
    <property type="term" value="C:filamentous actin"/>
    <property type="evidence" value="ECO:0000314"/>
    <property type="project" value="CAFA"/>
</dbReference>
<dbReference type="GO" id="GO:0030175">
    <property type="term" value="C:filopodium"/>
    <property type="evidence" value="ECO:0000250"/>
    <property type="project" value="AgBase"/>
</dbReference>
<dbReference type="GO" id="GO:0030027">
    <property type="term" value="C:lamellipodium"/>
    <property type="evidence" value="ECO:0000250"/>
    <property type="project" value="AgBase"/>
</dbReference>
<dbReference type="GO" id="GO:0098723">
    <property type="term" value="C:skeletal muscle myofibril"/>
    <property type="evidence" value="ECO:0000314"/>
    <property type="project" value="CAFA"/>
</dbReference>
<dbReference type="GO" id="GO:0001725">
    <property type="term" value="C:stress fiber"/>
    <property type="evidence" value="ECO:0000250"/>
    <property type="project" value="UniProtKB"/>
</dbReference>
<dbReference type="GO" id="GO:0005865">
    <property type="term" value="C:striated muscle thin filament"/>
    <property type="evidence" value="ECO:0000250"/>
    <property type="project" value="UniProtKB"/>
</dbReference>
<dbReference type="GO" id="GO:0003785">
    <property type="term" value="F:actin monomer binding"/>
    <property type="evidence" value="ECO:0000314"/>
    <property type="project" value="CAFA"/>
</dbReference>
<dbReference type="GO" id="GO:0005524">
    <property type="term" value="F:ATP binding"/>
    <property type="evidence" value="ECO:0007669"/>
    <property type="project" value="UniProtKB-KW"/>
</dbReference>
<dbReference type="GO" id="GO:0005509">
    <property type="term" value="F:calcium ion binding"/>
    <property type="evidence" value="ECO:0000314"/>
    <property type="project" value="CAFA"/>
</dbReference>
<dbReference type="GO" id="GO:0048306">
    <property type="term" value="F:calcium-dependent protein binding"/>
    <property type="evidence" value="ECO:0000353"/>
    <property type="project" value="AgBase"/>
</dbReference>
<dbReference type="GO" id="GO:0140660">
    <property type="term" value="F:cytoskeletal motor activator activity"/>
    <property type="evidence" value="ECO:0000314"/>
    <property type="project" value="CAFA"/>
</dbReference>
<dbReference type="GO" id="GO:0016787">
    <property type="term" value="F:hydrolase activity"/>
    <property type="evidence" value="ECO:0007669"/>
    <property type="project" value="UniProtKB-KW"/>
</dbReference>
<dbReference type="GO" id="GO:0042802">
    <property type="term" value="F:identical protein binding"/>
    <property type="evidence" value="ECO:0000353"/>
    <property type="project" value="IntAct"/>
</dbReference>
<dbReference type="GO" id="GO:0000287">
    <property type="term" value="F:magnesium ion binding"/>
    <property type="evidence" value="ECO:0000314"/>
    <property type="project" value="CAFA"/>
</dbReference>
<dbReference type="GO" id="GO:0032036">
    <property type="term" value="F:myosin heavy chain binding"/>
    <property type="evidence" value="ECO:0000353"/>
    <property type="project" value="CAFA"/>
</dbReference>
<dbReference type="GO" id="GO:0019904">
    <property type="term" value="F:protein domain specific binding"/>
    <property type="evidence" value="ECO:0000353"/>
    <property type="project" value="CAFA"/>
</dbReference>
<dbReference type="GO" id="GO:0031432">
    <property type="term" value="F:titin binding"/>
    <property type="evidence" value="ECO:0000353"/>
    <property type="project" value="CAFA"/>
</dbReference>
<dbReference type="GO" id="GO:0005523">
    <property type="term" value="F:tropomyosin binding"/>
    <property type="evidence" value="ECO:0000353"/>
    <property type="project" value="CAFA"/>
</dbReference>
<dbReference type="GO" id="GO:0031013">
    <property type="term" value="F:troponin I binding"/>
    <property type="evidence" value="ECO:0000353"/>
    <property type="project" value="CAFA"/>
</dbReference>
<dbReference type="GO" id="GO:0051017">
    <property type="term" value="P:actin filament bundle assembly"/>
    <property type="evidence" value="ECO:0000314"/>
    <property type="project" value="CAFA"/>
</dbReference>
<dbReference type="GO" id="GO:0030041">
    <property type="term" value="P:actin filament polymerization"/>
    <property type="evidence" value="ECO:0000314"/>
    <property type="project" value="CAFA"/>
</dbReference>
<dbReference type="GO" id="GO:0090131">
    <property type="term" value="P:mesenchyme migration"/>
    <property type="evidence" value="ECO:0000250"/>
    <property type="project" value="AgBase"/>
</dbReference>
<dbReference type="GO" id="GO:0010628">
    <property type="term" value="P:positive regulation of gene expression"/>
    <property type="evidence" value="ECO:0000250"/>
    <property type="project" value="AgBase"/>
</dbReference>
<dbReference type="GO" id="GO:0048741">
    <property type="term" value="P:skeletal muscle fiber development"/>
    <property type="evidence" value="ECO:0000250"/>
    <property type="project" value="UniProtKB"/>
</dbReference>
<dbReference type="GO" id="GO:0030240">
    <property type="term" value="P:skeletal muscle thin filament assembly"/>
    <property type="evidence" value="ECO:0000250"/>
    <property type="project" value="UniProtKB"/>
</dbReference>
<dbReference type="CDD" id="cd10224">
    <property type="entry name" value="ASKHA_NBD_actin"/>
    <property type="match status" value="1"/>
</dbReference>
<dbReference type="FunFam" id="3.30.420.40:FF:000131">
    <property type="entry name" value="Actin, alpha skeletal muscle"/>
    <property type="match status" value="1"/>
</dbReference>
<dbReference type="FunFam" id="3.30.420.40:FF:000291">
    <property type="entry name" value="Actin, alpha skeletal muscle"/>
    <property type="match status" value="1"/>
</dbReference>
<dbReference type="FunFam" id="3.90.640.10:FF:000047">
    <property type="entry name" value="Actin, alpha skeletal muscle"/>
    <property type="match status" value="1"/>
</dbReference>
<dbReference type="FunFam" id="3.30.420.40:FF:000058">
    <property type="entry name" value="Putative actin-related protein 5"/>
    <property type="match status" value="1"/>
</dbReference>
<dbReference type="Gene3D" id="3.30.420.40">
    <property type="match status" value="2"/>
</dbReference>
<dbReference type="Gene3D" id="3.90.640.10">
    <property type="entry name" value="Actin, Chain A, domain 4"/>
    <property type="match status" value="1"/>
</dbReference>
<dbReference type="IDEAL" id="IID50082"/>
<dbReference type="InterPro" id="IPR004000">
    <property type="entry name" value="Actin"/>
</dbReference>
<dbReference type="InterPro" id="IPR020902">
    <property type="entry name" value="Actin/actin-like_CS"/>
</dbReference>
<dbReference type="InterPro" id="IPR004001">
    <property type="entry name" value="Actin_CS"/>
</dbReference>
<dbReference type="InterPro" id="IPR043129">
    <property type="entry name" value="ATPase_NBD"/>
</dbReference>
<dbReference type="PANTHER" id="PTHR11937">
    <property type="entry name" value="ACTIN"/>
    <property type="match status" value="1"/>
</dbReference>
<dbReference type="Pfam" id="PF00022">
    <property type="entry name" value="Actin"/>
    <property type="match status" value="1"/>
</dbReference>
<dbReference type="PRINTS" id="PR00190">
    <property type="entry name" value="ACTIN"/>
</dbReference>
<dbReference type="SMART" id="SM00268">
    <property type="entry name" value="ACTIN"/>
    <property type="match status" value="1"/>
</dbReference>
<dbReference type="SUPFAM" id="SSF53067">
    <property type="entry name" value="Actin-like ATPase domain"/>
    <property type="match status" value="2"/>
</dbReference>
<dbReference type="PROSITE" id="PS00406">
    <property type="entry name" value="ACTINS_1"/>
    <property type="match status" value="1"/>
</dbReference>
<dbReference type="PROSITE" id="PS00432">
    <property type="entry name" value="ACTINS_2"/>
    <property type="match status" value="1"/>
</dbReference>
<dbReference type="PROSITE" id="PS01132">
    <property type="entry name" value="ACTINS_ACT_LIKE"/>
    <property type="match status" value="1"/>
</dbReference>
<sequence>MCDEDETTALVCDNGSGLVKAGFAGDDAPRAVFPSIVGRPRHQGVMVGMGQKDSYVGDEAQSKRGILTLKYPIEHGIITNWDDMEKIWHHTFYNELRVAPEEHPTLLTEAPLNPKANREKMTQIMFETFNVPAMYVAIQAVLSLYASGRTTGIVLDSGDGVTHNVPIYEGYALPHAIMRLDLAGRDLTDYLMKILTERGYSFVTTAEREIVRDIKEKLCYVALDFENEMATAASSSSLEKSYELPDGQVITIGNERFRCPETLFQPSFIGMESAGIHETTYNSIMKCDIDIRKDLYANNVMSGGTTMYPGIADRMQKEITALAPSTMKIKIIAPPERKYSVWIGGSILASLSTFQQMWITKQEYDEAGPSIVHRKCF</sequence>
<gene>
    <name type="primary">ACTA1</name>
    <name type="synonym">ACTA</name>
</gene>
<comment type="function">
    <text>Actins are highly conserved proteins that are involved in various types of cell motility and are ubiquitously expressed in all eukaryotic cells.</text>
</comment>
<comment type="catalytic activity">
    <reaction evidence="5">
        <text>ATP + H2O = ADP + phosphate + H(+)</text>
        <dbReference type="Rhea" id="RHEA:13065"/>
        <dbReference type="ChEBI" id="CHEBI:15377"/>
        <dbReference type="ChEBI" id="CHEBI:15378"/>
        <dbReference type="ChEBI" id="CHEBI:30616"/>
        <dbReference type="ChEBI" id="CHEBI:43474"/>
        <dbReference type="ChEBI" id="CHEBI:456216"/>
    </reaction>
</comment>
<comment type="subunit">
    <text evidence="3 7 10 13">Polymerization of globular actin (G-actin) leads to a structural filament (F-actin) in the form of a two-stranded helix. Each actin can bind to 4 others. Interacts with alpha-actinin (PubMed:8449927). Identified in a complex composed of ACTA1, COBL, GSN and TMSB4X (PubMed:23009842). Interacts with TTID (By similarity). Interacts (via its C-terminus) with USP25 (By similarity).</text>
</comment>
<comment type="interaction">
    <interactant intactId="EBI-367540">
        <id>P68135</id>
    </interactant>
    <interactant intactId="EBI-367540">
        <id>P68135</id>
        <label>ACTA1</label>
    </interactant>
    <organismsDiffer>false</organismsDiffer>
    <experiments>31</experiments>
</comment>
<comment type="interaction">
    <interactant intactId="EBI-367540">
        <id>P68135</id>
    </interactant>
    <interactant intactId="EBI-2967">
        <id>Q12386</id>
        <label>ARP8</label>
    </interactant>
    <organismsDiffer>true</organismsDiffer>
    <experiments>2</experiments>
</comment>
<comment type="interaction">
    <interactant intactId="EBI-367540">
        <id>P68135</id>
    </interactant>
    <interactant intactId="EBI-15573246">
        <id>Q8IRS7</id>
        <label>cib</label>
    </interactant>
    <organismsDiffer>true</organismsDiffer>
    <experiments>2</experiments>
</comment>
<comment type="interaction">
    <interactant intactId="EBI-367540">
        <id>P68135</id>
    </interactant>
    <interactant intactId="EBI-8602797">
        <id>P26932</id>
        <label>CNN1</label>
    </interactant>
    <organismsDiffer>true</organismsDiffer>
    <experiments>5</experiments>
</comment>
<comment type="interaction">
    <interactant intactId="EBI-367540">
        <id>P68135</id>
    </interactant>
    <interactant intactId="EBI-4853">
        <id>Q03048</id>
        <label>COF1</label>
    </interactant>
    <organismsDiffer>true</organismsDiffer>
    <experiments>3</experiments>
</comment>
<comment type="interaction">
    <interactant intactId="EBI-367540">
        <id>P68135</id>
    </interactant>
    <interactant intactId="EBI-4950">
        <id>Q06440</id>
        <label>CRN1</label>
    </interactant>
    <organismsDiffer>true</organismsDiffer>
    <experiments>3</experiments>
</comment>
<comment type="interaction">
    <interactant intactId="EBI-367540">
        <id>P68135</id>
    </interactant>
    <interactant intactId="EBI-8545986">
        <id>P00639</id>
        <label>DNASE1</label>
    </interactant>
    <organismsDiffer>true</organismsDiffer>
    <experiments>3</experiments>
</comment>
<comment type="interaction">
    <interactant intactId="EBI-367540">
        <id>P68135</id>
    </interactant>
    <interactant intactId="EBI-489887">
        <id>P50402</id>
        <label>EMD</label>
    </interactant>
    <organismsDiffer>true</organismsDiffer>
    <experiments>3</experiments>
</comment>
<comment type="interaction">
    <interactant intactId="EBI-367540">
        <id>P68135</id>
    </interactant>
    <interactant intactId="EBI-16027300">
        <id>Q6ZPF4-1</id>
        <label>Fmnl3</label>
    </interactant>
    <organismsDiffer>true</organismsDiffer>
    <experiments>3</experiments>
</comment>
<comment type="interaction">
    <interactant intactId="EBI-367540">
        <id>P68135</id>
    </interactant>
    <interactant intactId="EBI-2308857">
        <id>Q61553</id>
        <label>Fscn1</label>
    </interactant>
    <organismsDiffer>true</organismsDiffer>
    <experiments>2</experiments>
</comment>
<comment type="interaction">
    <interactant intactId="EBI-367540">
        <id>P68135</id>
    </interactant>
    <interactant intactId="EBI-351506">
        <id>P06396</id>
        <label>GSN</label>
    </interactant>
    <organismsDiffer>true</organismsDiffer>
    <experiments>10</experiments>
</comment>
<comment type="interaction">
    <interactant intactId="EBI-367540">
        <id>P68135</id>
    </interactant>
    <interactant intactId="EBI-2928504">
        <id>P08799</id>
        <label>mhcA</label>
    </interactant>
    <organismsDiffer>true</organismsDiffer>
    <experiments>8</experiments>
</comment>
<comment type="interaction">
    <interactant intactId="EBI-367540">
        <id>P68135</id>
    </interactant>
    <interactant intactId="EBI-8291665">
        <id>Q8K4J6</id>
        <label>Mrtfa</label>
    </interactant>
    <organismsDiffer>true</organismsDiffer>
    <experiments>15</experiments>
</comment>
<comment type="interaction">
    <interactant intactId="EBI-367540">
        <id>P68135</id>
    </interactant>
    <interactant intactId="EBI-8347074">
        <id>O70468</id>
        <label>Mybpc3</label>
    </interactant>
    <organismsDiffer>true</organismsDiffer>
    <experiments>2</experiments>
</comment>
<comment type="interaction">
    <interactant intactId="EBI-367540">
        <id>P68135</id>
    </interactant>
    <interactant intactId="EBI-713780">
        <id>P07737</id>
        <label>PFN1</label>
    </interactant>
    <organismsDiffer>true</organismsDiffer>
    <experiments>2</experiments>
</comment>
<comment type="interaction">
    <interactant intactId="EBI-367540">
        <id>P68135</id>
    </interactant>
    <interactant intactId="EBI-15741102">
        <id>Q9KS12</id>
        <label>rtxA</label>
    </interactant>
    <organismsDiffer>true</organismsDiffer>
    <experiments>4</experiments>
</comment>
<comment type="interaction">
    <interactant intactId="EBI-367540">
        <id>P68135</id>
    </interactant>
    <interactant intactId="EBI-3431623">
        <id>Q9U1K1-1</id>
        <label>spir</label>
    </interactant>
    <organismsDiffer>true</organismsDiffer>
    <experiments>6</experiments>
</comment>
<comment type="interaction">
    <interactant intactId="EBI-367540">
        <id>P68135</id>
    </interactant>
    <interactant intactId="EBI-15595598">
        <id>P21454</id>
        <label>spvB</label>
    </interactant>
    <organismsDiffer>true</organismsDiffer>
    <experiments>2</experiments>
</comment>
<comment type="interaction">
    <interactant intactId="EBI-367540">
        <id>P68135</id>
    </interactant>
    <interactant intactId="EBI-15605056">
        <id>Q6GX35</id>
        <label>tarP</label>
    </interactant>
    <organismsDiffer>true</organismsDiffer>
    <experiments>4</experiments>
</comment>
<comment type="interaction">
    <interactant intactId="EBI-367540">
        <id>P68135</id>
    </interactant>
    <interactant intactId="EBI-15662915">
        <id>Q9NG25</id>
        <label>toxofilin</label>
    </interactant>
    <organismsDiffer>true</organismsDiffer>
    <experiments>2</experiments>
</comment>
<comment type="interaction">
    <interactant intactId="EBI-367540">
        <id>P68135</id>
    </interactant>
    <interactant intactId="EBI-298478">
        <id>P58771</id>
        <label>Tpm1</label>
    </interactant>
    <organismsDiffer>true</organismsDiffer>
    <experiments>2</experiments>
</comment>
<comment type="interaction">
    <interactant intactId="EBI-367540">
        <id>P68135</id>
    </interactant>
    <interactant intactId="EBI-19663">
        <id>P53250</id>
        <label>TWF1</label>
    </interactant>
    <organismsDiffer>true</organismsDiffer>
    <experiments>5</experiments>
</comment>
<comment type="interaction">
    <interactant intactId="EBI-367540">
        <id>P68135</id>
    </interactant>
    <interactant intactId="EBI-527441">
        <id>Q91YR1</id>
        <label>Twf1</label>
    </interactant>
    <organismsDiffer>true</organismsDiffer>
    <experiments>2</experiments>
</comment>
<comment type="interaction">
    <interactant intactId="EBI-367540">
        <id>P68135</id>
    </interactant>
    <interactant intactId="EBI-6138078">
        <id>P12003-1</id>
        <label>VCL</label>
    </interactant>
    <organismsDiffer>true</organismsDiffer>
    <experiments>2</experiments>
</comment>
<comment type="interaction">
    <interactant intactId="EBI-367540">
        <id>P68135</id>
    </interactant>
    <interactant intactId="EBI-11027067">
        <id>P18206-2</id>
        <label>VCL</label>
    </interactant>
    <organismsDiffer>true</organismsDiffer>
    <experiments>2</experiments>
</comment>
<comment type="interaction">
    <interactant intactId="EBI-367540">
        <id>P68135</id>
    </interactant>
    <interactant intactId="EBI-15666619">
        <id>Q87GE5</id>
        <label>VPA1370</label>
    </interactant>
    <organismsDiffer>true</organismsDiffer>
    <experiments>10</experiments>
</comment>
<comment type="interaction">
    <interactant intactId="EBI-367540">
        <id>P68135</id>
    </interactant>
    <interactant intactId="EBI-957615">
        <id>O00401</id>
        <label>WASL</label>
    </interactant>
    <organismsDiffer>true</organismsDiffer>
    <experiments>2</experiments>
</comment>
<comment type="interaction">
    <interactant intactId="EBI-367540">
        <id>P68135</id>
    </interactant>
    <interactant intactId="EBI-642417">
        <id>Q91YD9</id>
        <label>Wasl</label>
    </interactant>
    <organismsDiffer>true</organismsDiffer>
    <experiments>5</experiments>
</comment>
<comment type="interaction">
    <interactant intactId="EBI-367540">
        <id>P68135</id>
    </interactant>
    <interactant intactId="EBI-16066991">
        <id>C5IZN1</id>
    </interactant>
    <organismsDiffer>true</organismsDiffer>
    <experiments>3</experiments>
</comment>
<comment type="interaction">
    <interactant intactId="EBI-367540">
        <id>P68135</id>
    </interactant>
    <interactant intactId="EBI-8446026">
        <id>Q05193-5</id>
    </interactant>
    <organismsDiffer>true</organismsDiffer>
    <experiments>5</experiments>
</comment>
<comment type="subcellular location">
    <subcellularLocation>
        <location>Cytoplasm</location>
        <location>Cytoskeleton</location>
    </subcellularLocation>
</comment>
<comment type="PTM">
    <molecule>Actin, alpha skeletal muscle, intermediate form</molecule>
    <text evidence="4">N-terminal cleavage of acetylated cysteine of intermediate muscle actin by ACTMAP.</text>
</comment>
<comment type="PTM">
    <text evidence="4">Oxidation of Met-46 and Met-49 by MICALs (MICAL1, MICAL2 or MICAL3) to form methionine sulfoxide promotes actin filament depolymerization. MICAL1 and MICAL2 produce the (R)-S-oxide form. The (R)-S-oxide form is reverted by MSRB1 and MSRB2, which promotes actin repolymerization.</text>
</comment>
<comment type="PTM">
    <text evidence="8">Can be mono-ADP-ribosylated on Arg-179 by SpvB of Salmonella spp. This modification blocks subsequent polymerization and leads to cell death.</text>
</comment>
<comment type="PTM">
    <text evidence="3">Monomethylation at Lys-86 (K84me1) regulates actin-myosin interaction and actomyosin-dependent processes. Demethylation by ALKBH4 is required for maintaining actomyosin dynamics supporting normal cleavage furrow ingression during cytokinesis and cell migration.</text>
</comment>
<comment type="PTM">
    <text evidence="3">Methylated at His-75 by SETD3.</text>
</comment>
<comment type="miscellaneous">
    <text>In vertebrates 3 main groups of actin isoforms, alpha, beta and gamma have been identified. The alpha actins are found in muscle tissues and are a major constituent of the contractile apparatus. The beta and gamma actins coexist in most cell types as components of the cytoskeleton and as mediators of internal cell motility.</text>
</comment>
<comment type="similarity">
    <text evidence="14">Belongs to the actin family.</text>
</comment>
<protein>
    <recommendedName>
        <fullName>Actin, alpha skeletal muscle</fullName>
        <ecNumber evidence="5">3.6.4.-</ecNumber>
    </recommendedName>
    <alternativeName>
        <fullName>Alpha-actin-1</fullName>
    </alternativeName>
    <component>
        <recommendedName>
            <fullName>Actin, alpha skeletal muscle, intermediate form</fullName>
        </recommendedName>
    </component>
</protein>
<evidence type="ECO:0000250" key="1"/>
<evidence type="ECO:0000250" key="2">
    <source>
        <dbReference type="UniProtKB" id="P62737"/>
    </source>
</evidence>
<evidence type="ECO:0000250" key="3">
    <source>
        <dbReference type="UniProtKB" id="P68133"/>
    </source>
</evidence>
<evidence type="ECO:0000250" key="4">
    <source>
        <dbReference type="UniProtKB" id="P68134"/>
    </source>
</evidence>
<evidence type="ECO:0000250" key="5">
    <source>
        <dbReference type="UniProtKB" id="P68137"/>
    </source>
</evidence>
<evidence type="ECO:0000269" key="6">
    <source>
    </source>
</evidence>
<evidence type="ECO:0000269" key="7">
    <source>
    </source>
</evidence>
<evidence type="ECO:0000269" key="8">
    <source>
    </source>
</evidence>
<evidence type="ECO:0000269" key="9">
    <source>
    </source>
</evidence>
<evidence type="ECO:0000269" key="10">
    <source>
    </source>
</evidence>
<evidence type="ECO:0000269" key="11">
    <source>
    </source>
</evidence>
<evidence type="ECO:0000269" key="12">
    <source>
    </source>
</evidence>
<evidence type="ECO:0000269" key="13">
    <source>
    </source>
</evidence>
<evidence type="ECO:0000305" key="14"/>
<evidence type="ECO:0000305" key="15">
    <source>
    </source>
</evidence>
<evidence type="ECO:0007744" key="16">
    <source>
        <dbReference type="PDB" id="1ATN"/>
    </source>
</evidence>
<evidence type="ECO:0007744" key="17">
    <source>
        <dbReference type="PDB" id="1NWK"/>
    </source>
</evidence>
<evidence type="ECO:0007744" key="18">
    <source>
        <dbReference type="PDB" id="2GWJ"/>
    </source>
</evidence>
<evidence type="ECO:0007744" key="19">
    <source>
        <dbReference type="PDB" id="2GWK"/>
    </source>
</evidence>
<evidence type="ECO:0007829" key="20">
    <source>
        <dbReference type="PDB" id="1ATN"/>
    </source>
</evidence>
<evidence type="ECO:0007829" key="21">
    <source>
        <dbReference type="PDB" id="1IJJ"/>
    </source>
</evidence>
<evidence type="ECO:0007829" key="22">
    <source>
        <dbReference type="PDB" id="1WUA"/>
    </source>
</evidence>
<evidence type="ECO:0007829" key="23">
    <source>
        <dbReference type="PDB" id="2FXU"/>
    </source>
</evidence>
<evidence type="ECO:0007829" key="24">
    <source>
        <dbReference type="PDB" id="2PBD"/>
    </source>
</evidence>
<evidence type="ECO:0007829" key="25">
    <source>
        <dbReference type="PDB" id="2Q0U"/>
    </source>
</evidence>
<evidence type="ECO:0007829" key="26">
    <source>
        <dbReference type="PDB" id="2ZWH"/>
    </source>
</evidence>
<evidence type="ECO:0007829" key="27">
    <source>
        <dbReference type="PDB" id="4B1Y"/>
    </source>
</evidence>
<evidence type="ECO:0007829" key="28">
    <source>
        <dbReference type="PDB" id="4H0T"/>
    </source>
</evidence>
<evidence type="ECO:0007829" key="29">
    <source>
        <dbReference type="PDB" id="4K41"/>
    </source>
</evidence>
<evidence type="ECO:0007829" key="30">
    <source>
        <dbReference type="PDB" id="4PKG"/>
    </source>
</evidence>
<evidence type="ECO:0007829" key="31">
    <source>
        <dbReference type="PDB" id="6JH9"/>
    </source>
</evidence>
<evidence type="ECO:0007829" key="32">
    <source>
        <dbReference type="PDB" id="6RSW"/>
    </source>
</evidence>
<evidence type="ECO:0007829" key="33">
    <source>
        <dbReference type="PDB" id="7PM8"/>
    </source>
</evidence>
<evidence type="ECO:0007829" key="34">
    <source>
        <dbReference type="PDB" id="7UUW"/>
    </source>
</evidence>
<proteinExistence type="evidence at protein level"/>
<feature type="initiator methionine" description="Removed">
    <location>
        <position position="1"/>
    </location>
</feature>
<feature type="chain" id="PRO_0000442811" description="Actin, alpha skeletal muscle, intermediate form" evidence="2">
    <location>
        <begin position="2"/>
        <end position="377"/>
    </location>
</feature>
<feature type="chain" id="PRO_0000442812" description="Actin, alpha skeletal muscle" evidence="6 12">
    <location>
        <begin position="3"/>
        <end position="377"/>
    </location>
</feature>
<feature type="region of interest" description="Interaction with alpha-actinin" evidence="13">
    <location>
        <begin position="112"/>
        <end position="125"/>
    </location>
</feature>
<feature type="region of interest" description="Interaction with alpha-actinin" evidence="13">
    <location>
        <begin position="360"/>
        <end position="372"/>
    </location>
</feature>
<feature type="modified residue" description="N-acetylcysteine; in intermediate form" evidence="2">
    <location>
        <position position="2"/>
    </location>
</feature>
<feature type="modified residue" description="N-acetylaspartate; in Actin, alpha skeletal muscle" evidence="6">
    <location>
        <position position="3"/>
    </location>
</feature>
<feature type="modified residue" description="Methionine (R)-sulfoxide" evidence="4">
    <location>
        <position position="46"/>
    </location>
</feature>
<feature type="modified residue" description="Methionine (R)-sulfoxide" evidence="4">
    <location>
        <position position="49"/>
    </location>
</feature>
<feature type="modified residue" description="N6-malonyllysine" evidence="1">
    <location>
        <position position="63"/>
    </location>
</feature>
<feature type="modified residue" description="Tele-methylhistidine" evidence="6 8 9 11 12 16 17">
    <location>
        <position position="75"/>
    </location>
</feature>
<feature type="modified residue" description="N6-methyllysine" evidence="3">
    <location>
        <position position="86"/>
    </location>
</feature>
<feature type="modified residue" description="ADP-ribosylarginine; by SpvB" evidence="15">
    <location>
        <position position="179"/>
    </location>
</feature>
<feature type="turn" evidence="20">
    <location>
        <begin position="4"/>
        <end position="8"/>
    </location>
</feature>
<feature type="strand" evidence="27">
    <location>
        <begin position="10"/>
        <end position="14"/>
    </location>
</feature>
<feature type="strand" evidence="27">
    <location>
        <begin position="16"/>
        <end position="23"/>
    </location>
</feature>
<feature type="strand" evidence="22">
    <location>
        <begin position="26"/>
        <end position="28"/>
    </location>
</feature>
<feature type="strand" evidence="27">
    <location>
        <begin position="30"/>
        <end position="34"/>
    </location>
</feature>
<feature type="strand" evidence="27">
    <location>
        <begin position="37"/>
        <end position="40"/>
    </location>
</feature>
<feature type="turn" evidence="23">
    <location>
        <begin position="42"/>
        <end position="44"/>
    </location>
</feature>
<feature type="strand" evidence="32">
    <location>
        <begin position="45"/>
        <end position="47"/>
    </location>
</feature>
<feature type="strand" evidence="30">
    <location>
        <begin position="49"/>
        <end position="51"/>
    </location>
</feature>
<feature type="strand" evidence="28">
    <location>
        <begin position="54"/>
        <end position="56"/>
    </location>
</feature>
<feature type="helix" evidence="27">
    <location>
        <begin position="57"/>
        <end position="62"/>
    </location>
</feature>
<feature type="helix" evidence="27">
    <location>
        <begin position="64"/>
        <end position="66"/>
    </location>
</feature>
<feature type="strand" evidence="27">
    <location>
        <begin position="67"/>
        <end position="70"/>
    </location>
</feature>
<feature type="strand" evidence="27">
    <location>
        <begin position="72"/>
        <end position="74"/>
    </location>
</feature>
<feature type="strand" evidence="34">
    <location>
        <begin position="75"/>
        <end position="78"/>
    </location>
</feature>
<feature type="helix" evidence="27">
    <location>
        <begin position="81"/>
        <end position="93"/>
    </location>
</feature>
<feature type="turn" evidence="29">
    <location>
        <begin position="94"/>
        <end position="96"/>
    </location>
</feature>
<feature type="helix" evidence="27">
    <location>
        <begin position="100"/>
        <end position="102"/>
    </location>
</feature>
<feature type="strand" evidence="27">
    <location>
        <begin position="105"/>
        <end position="109"/>
    </location>
</feature>
<feature type="strand" evidence="33">
    <location>
        <begin position="111"/>
        <end position="113"/>
    </location>
</feature>
<feature type="helix" evidence="27">
    <location>
        <begin position="115"/>
        <end position="127"/>
    </location>
</feature>
<feature type="strand" evidence="27">
    <location>
        <begin position="132"/>
        <end position="138"/>
    </location>
</feature>
<feature type="helix" evidence="27">
    <location>
        <begin position="139"/>
        <end position="146"/>
    </location>
</feature>
<feature type="strand" evidence="27">
    <location>
        <begin position="150"/>
        <end position="157"/>
    </location>
</feature>
<feature type="strand" evidence="26">
    <location>
        <begin position="158"/>
        <end position="160"/>
    </location>
</feature>
<feature type="strand" evidence="27">
    <location>
        <begin position="162"/>
        <end position="168"/>
    </location>
</feature>
<feature type="helix" evidence="27">
    <location>
        <begin position="174"/>
        <end position="176"/>
    </location>
</feature>
<feature type="strand" evidence="27">
    <location>
        <begin position="178"/>
        <end position="180"/>
    </location>
</feature>
<feature type="helix" evidence="27">
    <location>
        <begin position="184"/>
        <end position="196"/>
    </location>
</feature>
<feature type="turn" evidence="27">
    <location>
        <begin position="197"/>
        <end position="199"/>
    </location>
</feature>
<feature type="helix" evidence="27">
    <location>
        <begin position="205"/>
        <end position="218"/>
    </location>
</feature>
<feature type="helix" evidence="27">
    <location>
        <begin position="225"/>
        <end position="234"/>
    </location>
</feature>
<feature type="strand" evidence="24">
    <location>
        <begin position="236"/>
        <end position="238"/>
    </location>
</feature>
<feature type="strand" evidence="27">
    <location>
        <begin position="240"/>
        <end position="243"/>
    </location>
</feature>
<feature type="strand" evidence="31">
    <location>
        <begin position="245"/>
        <end position="247"/>
    </location>
</feature>
<feature type="strand" evidence="27">
    <location>
        <begin position="249"/>
        <end position="253"/>
    </location>
</feature>
<feature type="helix" evidence="27">
    <location>
        <begin position="255"/>
        <end position="264"/>
    </location>
</feature>
<feature type="helix" evidence="27">
    <location>
        <begin position="266"/>
        <end position="269"/>
    </location>
</feature>
<feature type="helix" evidence="27">
    <location>
        <begin position="276"/>
        <end position="285"/>
    </location>
</feature>
<feature type="helix" evidence="27">
    <location>
        <begin position="289"/>
        <end position="291"/>
    </location>
</feature>
<feature type="helix" evidence="27">
    <location>
        <begin position="292"/>
        <end position="296"/>
    </location>
</feature>
<feature type="strand" evidence="27">
    <location>
        <begin position="299"/>
        <end position="303"/>
    </location>
</feature>
<feature type="helix" evidence="27">
    <location>
        <begin position="304"/>
        <end position="306"/>
    </location>
</feature>
<feature type="strand" evidence="21">
    <location>
        <begin position="308"/>
        <end position="310"/>
    </location>
</feature>
<feature type="helix" evidence="27">
    <location>
        <begin position="311"/>
        <end position="322"/>
    </location>
</feature>
<feature type="helix" evidence="24">
    <location>
        <begin position="324"/>
        <end position="326"/>
    </location>
</feature>
<feature type="helix" evidence="27">
    <location>
        <begin position="337"/>
        <end position="339"/>
    </location>
</feature>
<feature type="helix" evidence="27">
    <location>
        <begin position="340"/>
        <end position="350"/>
    </location>
</feature>
<feature type="helix" evidence="27">
    <location>
        <begin position="352"/>
        <end position="357"/>
    </location>
</feature>
<feature type="strand" evidence="27">
    <location>
        <begin position="358"/>
        <end position="360"/>
    </location>
</feature>
<feature type="helix" evidence="27">
    <location>
        <begin position="361"/>
        <end position="367"/>
    </location>
</feature>
<feature type="helix" evidence="25">
    <location>
        <begin position="368"/>
        <end position="370"/>
    </location>
</feature>
<feature type="helix" evidence="27">
    <location>
        <begin position="371"/>
        <end position="375"/>
    </location>
</feature>
<name>ACTS_RABIT</name>
<keyword id="KW-0002">3D-structure</keyword>
<keyword id="KW-0007">Acetylation</keyword>
<keyword id="KW-0013">ADP-ribosylation</keyword>
<keyword id="KW-0067">ATP-binding</keyword>
<keyword id="KW-0963">Cytoplasm</keyword>
<keyword id="KW-0206">Cytoskeleton</keyword>
<keyword id="KW-0903">Direct protein sequencing</keyword>
<keyword id="KW-0378">Hydrolase</keyword>
<keyword id="KW-0488">Methylation</keyword>
<keyword id="KW-0514">Muscle protein</keyword>
<keyword id="KW-0547">Nucleotide-binding</keyword>
<keyword id="KW-0558">Oxidation</keyword>
<keyword id="KW-1185">Reference proteome</keyword>
<accession>P68135</accession>
<accession>P02568</accession>
<accession>P99020</accession>